<proteinExistence type="evidence at protein level"/>
<comment type="function">
    <molecule>Capsid protein C</molecule>
    <text evidence="5 21">Plays a role in virus budding by binding to the cell membrane and gathering the viral RNA into a nucleocapsid that forms the core of a mature virus particle (By similarity). During virus entry, may induce genome penetration into the host cytoplasm after hemifusion induced by the surface proteins (By similarity). Can migrate to the cell nucleus where it modulates host functions (By similarity). Overcomes the anti-viral effects of host EXOC1 by sequestering and degrading the latter through the proteasome degradation pathway (PubMed:23522008).</text>
</comment>
<comment type="function">
    <molecule>Capsid protein C</molecule>
    <text evidence="1">Inhibits RNA silencing by interfering with host Dicer.</text>
</comment>
<comment type="function">
    <molecule>Peptide pr</molecule>
    <text evidence="5">Prevents premature fusion activity of envelope proteins in trans-Golgi by binding to envelope protein E at pH6.0. After virion release in extracellular space, gets dissociated from E dimers.</text>
</comment>
<comment type="function">
    <molecule>Protein prM</molecule>
    <text evidence="5">Acts as a chaperone for envelope protein E during intracellular virion assembly by masking and inactivating envelope protein E fusion peptide. prM is the only viral peptide matured by host furin in the trans-Golgi network probably to avoid catastrophic activation of the viral fusion activity in acidic Golgi compartment prior to virion release. prM-E cleavage is inefficient, and many virions are only partially matured. These uncleaved prM would play a role in immune evasion.</text>
</comment>
<comment type="function">
    <molecule>Small envelope protein M</molecule>
    <text evidence="5">May play a role in virus budding. Exerts cytotoxic effects by activating a mitochondrial apoptotic pathway through M ectodomain. May display a viroporin activity.</text>
</comment>
<comment type="function">
    <molecule>Envelope protein E</molecule>
    <text evidence="5">Binds to host cell surface receptor and mediates fusion between viral and cellular membranes (PubMed:15367621). Envelope protein is synthesized in the endoplasmic reticulum in the form of heterodimer with protein prM (By similarity). They play a role in virion budding in the ER, and the newly formed immature particle is covered with 60 spikes composed of heterodimer between precursor prM and envelope protein E (By similarity). The virion is transported to the Golgi apparatus where the low pH causes dissociation of PrM-E heterodimers and formation of E homodimers (By similarity). prM-E cleavage is inefficient, and many virions are only partially matured (By similarity). These uncleaved prM would play a role in immune evasion (By similarity).</text>
</comment>
<comment type="function">
    <molecule>Non-structural protein 1</molecule>
    <text evidence="9">Involved in immune evasion, pathogenesis and viral replication. Once cleaved off the polyprotein, is targeted to three destinations: the viral replication cycle, the plasma membrane and the extracellular compartment. Essential for viral replication. Required for formation of the replication complex and recruitment of other non-structural proteins to the ER-derived membrane structures. Excreted as a hexameric lipoparticle that plays a role against host immune response. Antagonizing the complement function. Binds to the host macrophages and dendritic cells. Inhibits signal transduction originating from Toll-like receptor 3 (TLR3).</text>
</comment>
<comment type="function">
    <molecule>Non-structural protein 2A</molecule>
    <text evidence="2">Component of the viral RNA replication complex that functions in virion assembly and antagonizes the host alpha/beta interferon antiviral response.</text>
</comment>
<comment type="function">
    <molecule>Serine protease subunit NS2B</molecule>
    <text evidence="5 14">Required cofactor for the serine protease function of NS3. May have membrane-destabilizing activity and form viroporins (By similarity).</text>
</comment>
<comment type="function">
    <molecule>Serine protease/Helicase NS3</molecule>
    <text evidence="2 9 15">Displays three enzymatic activities: serine protease, NTPase and RNA helicase. NS3 serine protease, in association with NS2B, performs its autocleavage and cleaves the polyprotein at dibasic sites in the cytoplasm: C-prM, NS2A-NS2B, NS2B-NS3, NS3-NS4A, NS4A-2K and NS4B-NS5. NS3 RNA helicase binds RNA and unwinds dsRNA in the 3' to 5' direction (By similarity). NS3 supports the separation of RNA daughter and template strands during viral replication. The helicase part is involved in the inhibition of phosphorylation of host STAT1, and thereby inhibition of host type-I IFN signaling (By similarity). In addition, NS3 assists the initiation of replication by unwinding the RNA secondary structure in the 3' non-translated region (NTR). Inhibits STAT2 translocation in the nucleus after IFN-alpha treatment (By similarity).</text>
</comment>
<comment type="function">
    <molecule>Non-structural protein 4A</molecule>
    <text evidence="9">Regulates the ATPase activity of the NS3 helicase activity. NS4A allows NS3 helicase to conserve energy during unwinding.</text>
</comment>
<comment type="function">
    <molecule>Peptide 2k</molecule>
    <text evidence="5">Functions as a signal peptide for NS4B and is required for the interferon antagonism activity of the latter.</text>
</comment>
<comment type="function">
    <molecule>Non-structural protein 4B</molecule>
    <text evidence="9">Induces the formation of ER-derived membrane vesicles where the viral replication takes place. Inhibits interferon (IFN)-induced host STAT1 phosphorylation and nuclear translocation, thereby preventing the establishment of cellular antiviral state by blocking the IFN-alpha/beta pathway. Inhibits STAT2 translocation in the nucleus after IFN-alpha treatment.</text>
</comment>
<comment type="function">
    <molecule>RNA-directed RNA polymerase NS5</molecule>
    <text evidence="9 19">Replicates the viral (+) and (-) RNA genome, and performs the capping of genomes in the cytoplasm (PubMed:17267492). NS5 methylates viral RNA cap at guanine N-7 and ribose 2'-O positions (PubMed:17267492). Besides its role in RNA genome replication, also prevents the establishment of cellular antiviral state by blocking the interferon-alpha/beta (IFN-alpha/beta) signaling pathway (By similarity). Inhibits host TYK2 and STAT2 phosphorylation, thereby preventing activation of JAK-STAT signaling pathway (By similarity).</text>
</comment>
<comment type="catalytic activity">
    <reaction>
        <text>Selective hydrolysis of -Xaa-Xaa-|-Yaa- bonds in which each of the Xaa can be either Arg or Lys and Yaa can be either Ser or Ala.</text>
        <dbReference type="EC" id="3.4.21.91"/>
    </reaction>
</comment>
<comment type="catalytic activity">
    <reaction evidence="11">
        <text>RNA(n) + a ribonucleoside 5'-triphosphate = RNA(n+1) + diphosphate</text>
        <dbReference type="Rhea" id="RHEA:21248"/>
        <dbReference type="Rhea" id="RHEA-COMP:14527"/>
        <dbReference type="Rhea" id="RHEA-COMP:17342"/>
        <dbReference type="ChEBI" id="CHEBI:33019"/>
        <dbReference type="ChEBI" id="CHEBI:61557"/>
        <dbReference type="ChEBI" id="CHEBI:140395"/>
        <dbReference type="EC" id="2.7.7.48"/>
    </reaction>
</comment>
<comment type="catalytic activity">
    <reaction>
        <text>a ribonucleoside 5'-triphosphate + H2O = a ribonucleoside 5'-diphosphate + phosphate + H(+)</text>
        <dbReference type="Rhea" id="RHEA:23680"/>
        <dbReference type="ChEBI" id="CHEBI:15377"/>
        <dbReference type="ChEBI" id="CHEBI:15378"/>
        <dbReference type="ChEBI" id="CHEBI:43474"/>
        <dbReference type="ChEBI" id="CHEBI:57930"/>
        <dbReference type="ChEBI" id="CHEBI:61557"/>
        <dbReference type="EC" id="3.6.1.15"/>
    </reaction>
</comment>
<comment type="catalytic activity">
    <reaction evidence="9">
        <text>ATP + H2O = ADP + phosphate + H(+)</text>
        <dbReference type="Rhea" id="RHEA:13065"/>
        <dbReference type="ChEBI" id="CHEBI:15377"/>
        <dbReference type="ChEBI" id="CHEBI:15378"/>
        <dbReference type="ChEBI" id="CHEBI:30616"/>
        <dbReference type="ChEBI" id="CHEBI:43474"/>
        <dbReference type="ChEBI" id="CHEBI:456216"/>
        <dbReference type="EC" id="3.6.4.13"/>
    </reaction>
</comment>
<comment type="catalytic activity">
    <reaction evidence="16">
        <text>a 5'-end (5'-triphosphoguanosine)-ribonucleoside in mRNA + S-adenosyl-L-methionine = a 5'-end (N(7)-methyl 5'-triphosphoguanosine)-ribonucleoside in mRNA + S-adenosyl-L-homocysteine</text>
        <dbReference type="Rhea" id="RHEA:67008"/>
        <dbReference type="Rhea" id="RHEA-COMP:17166"/>
        <dbReference type="Rhea" id="RHEA-COMP:17167"/>
        <dbReference type="ChEBI" id="CHEBI:57856"/>
        <dbReference type="ChEBI" id="CHEBI:59789"/>
        <dbReference type="ChEBI" id="CHEBI:156461"/>
        <dbReference type="ChEBI" id="CHEBI:167617"/>
        <dbReference type="EC" id="2.1.1.56"/>
    </reaction>
</comment>
<comment type="catalytic activity">
    <reaction evidence="16">
        <text>a 5'-end (N(7)-methyl 5'-triphosphoguanosine)-ribonucleoside in mRNA + S-adenosyl-L-methionine = a 5'-end (N(7)-methyl 5'-triphosphoguanosine)-(2'-O-methyl-ribonucleoside) in mRNA + S-adenosyl-L-homocysteine + H(+)</text>
        <dbReference type="Rhea" id="RHEA:67020"/>
        <dbReference type="Rhea" id="RHEA-COMP:17167"/>
        <dbReference type="Rhea" id="RHEA-COMP:17168"/>
        <dbReference type="ChEBI" id="CHEBI:15378"/>
        <dbReference type="ChEBI" id="CHEBI:57856"/>
        <dbReference type="ChEBI" id="CHEBI:59789"/>
        <dbReference type="ChEBI" id="CHEBI:156461"/>
        <dbReference type="ChEBI" id="CHEBI:167609"/>
        <dbReference type="EC" id="2.1.1.57"/>
    </reaction>
</comment>
<comment type="subunit">
    <molecule>Capsid protein C</molecule>
    <text evidence="5 9 20 21">Homodimer (By similarity). Interacts (via N-terminus) with host EXOC1 (via C-terminus) (PubMed:19889084, PubMed:23522008); this interaction results in EXOC1 degradation through the proteasome degradation pathway (PubMed:23522008). Interacts with host DDX56; this interaction plays an important role in genomic RNA encapsidation (By similarity).</text>
</comment>
<comment type="subunit">
    <molecule>Protein prM</molecule>
    <text evidence="5">Forms heterodimers with envelope protein E in the endoplasmic reticulum and Golgi (By similarity).</text>
</comment>
<comment type="subunit">
    <molecule>Envelope protein E</molecule>
    <text evidence="5">Homodimer; in the endoplasmic reticulum and Golgi (By similarity).</text>
</comment>
<comment type="subunit">
    <molecule>Non-structural protein 1</molecule>
    <text evidence="9">Homodimer; Homohexamer when secreted (By similarity). Interacts with envelope protein E (By similarity). NS1 interacts with NS4B (By similarity). Interacts with host complement protein CFH; this interaction leads to the degradation of C3 (By similarity).</text>
</comment>
<comment type="subunit">
    <molecule>Non-structural protein 2A</molecule>
    <text evidence="1">Interacts (via N-terminus) with serine protease NS3.</text>
</comment>
<comment type="subunit">
    <molecule>Serine protease subunit NS2B</molecule>
    <text evidence="5">Forms a heterodimer with serine protease NS3 (By similarity). May form homooligomers (By similarity).</text>
</comment>
<comment type="subunit">
    <molecule>Serine protease/Helicase NS3</molecule>
    <text evidence="5">Forms a heterodimer with NS2B (By similarity). Interacts with NS4B (By similarity). Interacts with unphosphorylated RNA-directed RNA polymerase NS5; this interaction stimulates RNA-directed RNA polymerase NS5 guanylyltransferase activity (By similarity).</text>
</comment>
<comment type="subunit">
    <molecule>Non-structural protein 4B</molecule>
    <text evidence="5 9">Interacts with Serine protease/Helicase NS3 (By similarity). Interacts with NS1 (By similarity).</text>
</comment>
<comment type="subunit">
    <molecule>RNA-directed RNA polymerase NS5</molecule>
    <text evidence="5 23">Homodimer (By similarity). Interacts with host STAT2; this interaction inhibits the phosphorylation of the latter, and, when all viral proteins are present (polyprotein), targets STAT2 for degradation (By similarity). Interacts with host PAF1 complex (PubMed:30550790).</text>
</comment>
<comment type="interaction">
    <interactant intactId="EBI-981051">
        <id>P06935</id>
    </interactant>
    <interactant intactId="EBI-702847">
        <id>P05106</id>
        <label>ITGB3</label>
    </interactant>
    <organismsDiffer>true</organismsDiffer>
    <experiments>4</experiments>
</comment>
<comment type="interaction">
    <interactant intactId="EBI-2912469">
        <id>PRO_0000037746</id>
    </interactant>
    <interactant intactId="EBI-2912457">
        <id>Q17NZ6</id>
        <label>5563672</label>
    </interactant>
    <organismsDiffer>true</organismsDiffer>
    <experiments>5</experiments>
</comment>
<comment type="subcellular location">
    <molecule>Capsid protein C</molecule>
    <subcellularLocation>
        <location evidence="5">Virion</location>
    </subcellularLocation>
    <subcellularLocation>
        <location evidence="5">Host nucleus</location>
    </subcellularLocation>
    <subcellularLocation>
        <location evidence="20">Host cytoplasm</location>
    </subcellularLocation>
    <subcellularLocation>
        <location evidence="20">Host cytoplasm</location>
        <location evidence="20">Host perinuclear region</location>
    </subcellularLocation>
</comment>
<comment type="subcellular location">
    <molecule>Peptide pr</molecule>
    <subcellularLocation>
        <location evidence="5">Secreted</location>
    </subcellularLocation>
</comment>
<comment type="subcellular location">
    <molecule>Small envelope protein M</molecule>
    <subcellularLocation>
        <location evidence="1">Virion membrane</location>
        <topology evidence="1">Multi-pass membrane protein</topology>
    </subcellularLocation>
    <subcellularLocation>
        <location evidence="1">Host endoplasmic reticulum membrane</location>
        <topology evidence="10">Multi-pass membrane protein</topology>
    </subcellularLocation>
    <text evidence="1">ER membrane retention is mediated by the transmembrane domains.</text>
</comment>
<comment type="subcellular location">
    <molecule>Envelope protein E</molecule>
    <subcellularLocation>
        <location evidence="27">Virion membrane</location>
        <topology evidence="1">Multi-pass membrane protein</topology>
    </subcellularLocation>
    <subcellularLocation>
        <location evidence="1">Host endoplasmic reticulum membrane</location>
        <topology evidence="10">Multi-pass membrane protein</topology>
    </subcellularLocation>
    <text evidence="1">ER membrane retention is mediated by the transmembrane domains.</text>
</comment>
<comment type="subcellular location">
    <molecule>Non-structural protein 1</molecule>
    <subcellularLocation>
        <location evidence="5">Secreted</location>
    </subcellularLocation>
    <subcellularLocation>
        <location>Host endoplasmic reticulum membrane</location>
        <topology>Peripheral membrane protein</topology>
        <orientation evidence="5">Lumenal side</orientation>
    </subcellularLocation>
    <text evidence="9">Located in RE-derived vesicles hosting the replication complex.</text>
</comment>
<comment type="subcellular location">
    <molecule>Non-structural protein 2A</molecule>
    <subcellularLocation>
        <location evidence="2">Host endoplasmic reticulum membrane</location>
        <topology evidence="5">Multi-pass membrane protein</topology>
    </subcellularLocation>
</comment>
<comment type="subcellular location">
    <molecule>Serine protease subunit NS2B</molecule>
    <subcellularLocation>
        <location>Host endoplasmic reticulum membrane</location>
        <topology evidence="5">Multi-pass membrane protein</topology>
    </subcellularLocation>
</comment>
<comment type="subcellular location">
    <molecule>Serine protease/Helicase NS3</molecule>
    <subcellularLocation>
        <location evidence="15">Host endoplasmic reticulum membrane</location>
        <topology evidence="15">Peripheral membrane protein</topology>
        <orientation evidence="15">Cytoplasmic side</orientation>
    </subcellularLocation>
    <text evidence="15">Remains non-covalently associated to serine protease subunit NS2B.</text>
</comment>
<comment type="subcellular location">
    <molecule>Non-structural protein 4A</molecule>
    <subcellularLocation>
        <location evidence="2">Host endoplasmic reticulum membrane</location>
        <topology evidence="5">Multi-pass membrane protein</topology>
    </subcellularLocation>
    <text evidence="5">Located in RE-associated vesicles hosting the replication complex.</text>
</comment>
<comment type="subcellular location">
    <molecule>Non-structural protein 4B</molecule>
    <subcellularLocation>
        <location evidence="5">Host endoplasmic reticulum membrane</location>
        <topology evidence="5">Multi-pass membrane protein</topology>
    </subcellularLocation>
    <text evidence="9">Located in RE-derived vesicles hosting the replication complex.</text>
</comment>
<comment type="subcellular location">
    <molecule>RNA-directed RNA polymerase NS5</molecule>
    <subcellularLocation>
        <location>Host endoplasmic reticulum membrane</location>
        <topology>Peripheral membrane protein</topology>
        <orientation>Cytoplasmic side</orientation>
    </subcellularLocation>
    <subcellularLocation>
        <location evidence="17">Host nucleus</location>
    </subcellularLocation>
    <subcellularLocation>
        <location evidence="2">Host cytoplasm</location>
    </subcellularLocation>
    <text evidence="2 5">Located in RE-associated vesicles hosting the replication complex. NS5 protein is mainly localized in the nucleus rather than in ER vesicles (By similarity). Shuttles between the cytoplasm and nucleus (By similarity).</text>
</comment>
<comment type="domain">
    <molecule>Small envelope protein M</molecule>
    <text evidence="5">The transmembrane domains contain an endoplasmic reticulum retention signal.</text>
</comment>
<comment type="domain">
    <molecule>Envelope protein E</molecule>
    <text evidence="5">The transmembrane domains contain an endoplasmic reticulum retention signal.</text>
</comment>
<comment type="domain">
    <molecule>RNA-directed RNA polymerase NS5</molecule>
    <text evidence="24">Contains a PDZ-binding motif that binds to several PDZ-containing cellular proteins. These interactions seem necessary for an optimal viral replication.</text>
</comment>
<comment type="PTM">
    <molecule>Genome polyprotein</molecule>
    <text evidence="5 18">Specific enzymatic cleavages in vivo yield mature proteins. Cleavages in the lumen of endoplasmic reticulum are performed by host signal peptidase, whereas cleavages in the cytoplasmic side are performed by serine protease NS3. Signal cleavage at the 2K-4B site requires a prior NS3 protease-mediated cleavage at the 4A-2K site.</text>
</comment>
<comment type="PTM">
    <molecule>Protein prM</molecule>
    <text evidence="5">Cleaved in post-Golgi vesicles by a host furin, releasing the mature small envelope protein M, and peptide pr. This cleavage is incomplete as up to 30% of viral particles still carry uncleaved prM.</text>
</comment>
<comment type="PTM">
    <molecule>Envelope protein E</molecule>
    <text evidence="22">Not N-glycosylated.</text>
</comment>
<comment type="PTM">
    <molecule>Non-structural protein 1</molecule>
    <text evidence="5">N-glycosylated. The excreted form is glycosylated and this is required for efficient secretion of the protein from infected cells.</text>
</comment>
<comment type="PTM">
    <molecule>Serine protease/Helicase NS3</molecule>
    <text evidence="7">Acetylated by host KAT5. Acetylation modulates NS3 RNA-binding and unwinding activities and plays an important positive role for viral replication.</text>
</comment>
<comment type="PTM">
    <molecule>RNA-directed RNA polymerase NS5</molecule>
    <text evidence="5">Phosphorylated on serines residues. This phosphorylation may trigger NS5 nuclear localization.</text>
</comment>
<comment type="similarity">
    <text evidence="16">In the N-terminal section; belongs to the class I-like SAM-binding methyltransferase superfamily. mRNA cap 0-1 NS5-type methyltransferase family.</text>
</comment>
<organismHost>
    <name type="scientific">Aedes</name>
    <dbReference type="NCBI Taxonomy" id="7158"/>
</organismHost>
<organismHost>
    <name type="scientific">Alligator</name>
    <dbReference type="NCBI Taxonomy" id="8495"/>
</organismHost>
<organismHost>
    <name type="scientific">Amblyomma variegatum</name>
    <name type="common">Tropical bont tick</name>
    <dbReference type="NCBI Taxonomy" id="34610"/>
</organismHost>
<organismHost>
    <name type="scientific">Aves</name>
    <dbReference type="NCBI Taxonomy" id="8782"/>
</organismHost>
<organismHost>
    <name type="scientific">Culex</name>
    <dbReference type="NCBI Taxonomy" id="53527"/>
</organismHost>
<organismHost>
    <name type="scientific">Equus caballus</name>
    <name type="common">Horse</name>
    <dbReference type="NCBI Taxonomy" id="9796"/>
</organismHost>
<organismHost>
    <name type="scientific">Homo sapiens</name>
    <name type="common">Human</name>
    <dbReference type="NCBI Taxonomy" id="9606"/>
</organismHost>
<organismHost>
    <name type="scientific">Hyalomma marginatum</name>
    <dbReference type="NCBI Taxonomy" id="34627"/>
</organismHost>
<organismHost>
    <name type="scientific">Mansonia uniformis</name>
    <dbReference type="NCBI Taxonomy" id="308735"/>
</organismHost>
<organismHost>
    <name type="scientific">Mimomyia</name>
    <dbReference type="NCBI Taxonomy" id="308737"/>
</organismHost>
<organismHost>
    <name type="scientific">Ovis aries</name>
    <name type="common">Sheep</name>
    <dbReference type="NCBI Taxonomy" id="9940"/>
</organismHost>
<organismHost>
    <name type="scientific">Rhipicephalus</name>
    <dbReference type="NCBI Taxonomy" id="34630"/>
</organismHost>
<organismHost>
    <name type="scientific">Sciurus niger</name>
    <name type="common">Eastern fox squirrel</name>
    <dbReference type="NCBI Taxonomy" id="34861"/>
</organismHost>
<reference key="1">
    <citation type="journal article" date="1986" name="Virology">
        <title>Primary structure of the West Nile flavivirus genome region coding for all nonstructural proteins.</title>
        <authorList>
            <person name="Castle E."/>
            <person name="Leidner U."/>
            <person name="Nowak T."/>
            <person name="Wengler G."/>
            <person name="Wengler G."/>
        </authorList>
    </citation>
    <scope>NUCLEOTIDE SEQUENCE [GENOMIC RNA]</scope>
</reference>
<reference key="2">
    <citation type="journal article" date="2001" name="Virology">
        <title>An infectious clone of the West Nile flavivirus.</title>
        <authorList>
            <person name="Yamshchikov V.F."/>
            <person name="Wengler G."/>
            <person name="Perelygin A.A."/>
            <person name="Brinton M.A."/>
            <person name="Compans R.W."/>
        </authorList>
    </citation>
    <scope>SEQUENCE REVISION TO 1908; 2018-2036; 2242 AND 2859-2860</scope>
</reference>
<reference key="3">
    <citation type="journal article" date="1985" name="Virology">
        <title>Sequence analysis of the viral core protein and the membrane-associated proteins V1 and NV2 of the flavivirus West Nile virus and of the genome sequence for these proteins.</title>
        <authorList>
            <person name="Castle E."/>
            <person name="Nowak T."/>
            <person name="Leidner U."/>
            <person name="Wengler G."/>
            <person name="Wengler G."/>
        </authorList>
    </citation>
    <scope>NUCLEOTIDE SEQUENCE [GENOMIC RNA] OF 1-291</scope>
</reference>
<reference key="4">
    <citation type="journal article" date="1985" name="Virology">
        <title>Sequence analysis of the membrane protein V3 of the flavivirus West Nile virus and of its gene.</title>
        <authorList>
            <person name="Wengler G."/>
            <person name="Castle E."/>
            <person name="Leidner U."/>
            <person name="Nowak T."/>
            <person name="Wengler G."/>
        </authorList>
    </citation>
    <scope>NUCLEOTIDE SEQUENCE [GENOMIC RNA] OF 255-854</scope>
</reference>
<reference key="5">
    <citation type="journal article" date="1987" name="Virology">
        <title>Studies on the glycosylation of flavivirus E proteins and the role of carbohydrate in antigenic structure.</title>
        <authorList>
            <person name="Winkler G."/>
            <person name="Heinz F.X."/>
            <person name="Kunz C."/>
        </authorList>
    </citation>
    <scope>ABSENCE OF GLYCOSYLATION (ENVELOPE PROTEIN E)</scope>
</reference>
<reference key="6">
    <citation type="journal article" date="1987" name="Virology">
        <title>Analysis of disulfides present in the membrane proteins of the West Nile flavivirus.</title>
        <authorList>
            <person name="Nowak T."/>
            <person name="Wengler G."/>
        </authorList>
    </citation>
    <scope>DISULFIDE BONDS (ENVELOPE PROTEIN E)</scope>
</reference>
<reference key="7">
    <citation type="journal article" date="2004" name="J. Virol.">
        <title>Infectious entry of West Nile virus occurs through a clathrin-mediated endocytic pathway.</title>
        <authorList>
            <person name="Chu J.J."/>
            <person name="Ng M.L."/>
        </authorList>
    </citation>
    <scope>FUNCTION (ENVELOPE PROTEIN E)</scope>
</reference>
<reference key="8">
    <citation type="journal article" date="2006" name="J. Virol.">
        <title>Nuclear localization of flavivirus RNA synthesis in infected cells.</title>
        <authorList>
            <person name="Uchil P.D."/>
            <person name="Kumar A.V."/>
            <person name="Satchidanandam V."/>
        </authorList>
    </citation>
    <scope>SUBCELLULAR LOCATION (RNA-DIRECTED RNA POLYMERASE NS5)</scope>
    <source>
        <strain>E101</strain>
    </source>
</reference>
<reference key="9">
    <citation type="journal article" date="2007" name="J. Virol.">
        <title>Structure and function of flavivirus NS5 methyltransferase.</title>
        <authorList>
            <person name="Zhou Y."/>
            <person name="Ray D."/>
            <person name="Zhao Y."/>
            <person name="Dong H."/>
            <person name="Ren S."/>
            <person name="Li Z."/>
            <person name="Guo Y."/>
            <person name="Bernard K.A."/>
            <person name="Shi P.-Y."/>
            <person name="Li H."/>
        </authorList>
    </citation>
    <scope>FUNCTION (RNA-DIRECTED RNA POLYMERASE NS5)</scope>
    <scope>MUTAGENESIS OF LYS-2586; ASP-2671; LYS-2707 AND GLU-2743</scope>
</reference>
<reference key="10">
    <citation type="journal article" date="2007" name="Biochem. J.">
        <title>Cleavage preference distinguishes the two-component NS2B-NS3 serine proteinases of Dengue and West Nile viruses.</title>
        <authorList>
            <person name="Shiryaev S.A."/>
            <person name="Kozlov I.A."/>
            <person name="Ratnikov B.I."/>
            <person name="Smith J.W."/>
            <person name="Lebl M."/>
            <person name="Strongin A.Y."/>
        </authorList>
    </citation>
    <scope>PROTEOLYTIC PROCESSING (GENOME POLYPROTEIN)</scope>
</reference>
<reference key="11">
    <citation type="journal article" date="2010" name="Cell. Microbiol.">
        <title>Human Sec3 protein is a novel transcriptional and translational repressor of flavivirus.</title>
        <authorList>
            <person name="Bhuvanakantham R."/>
            <person name="Li J."/>
            <person name="Tan T.T."/>
            <person name="Ng M.L."/>
        </authorList>
    </citation>
    <scope>INTERACTION WITH HUMAN EXOC1 (CAPSID PROTEIN C)</scope>
    <scope>SUBCELLULAR LOCATION (CAPSID PROTEIN C)</scope>
</reference>
<reference key="12">
    <citation type="journal article" date="2013" name="Cell. Microbiol.">
        <title>West Nile virus and dengue virus capsid protein negates the antiviral activity of human Sec3 protein through the proteasome pathway.</title>
        <authorList>
            <person name="Bhuvanakantham R."/>
            <person name="Ng M.L."/>
        </authorList>
    </citation>
    <scope>INTERACTION WITH HUMAN EXOC1 (CAPSID PROTEIN C)</scope>
    <scope>FUNCTION (CAPSID PROTEIN C)</scope>
    <scope>MUTAGENESIS OF VAL-14</scope>
</reference>
<reference key="13">
    <citation type="journal article" date="2018" name="Cell">
        <title>Comparative Flavivirus-Host Protein Interaction Mapping Reveals Mechanisms of Dengue and Zika Virus Pathogenesis.</title>
        <authorList>
            <person name="Shah P.S."/>
            <person name="Link N."/>
            <person name="Jang G.M."/>
            <person name="Sharp P.P."/>
            <person name="Zhu T."/>
            <person name="Swaney D.L."/>
            <person name="Johnson J.R."/>
            <person name="Von Dollen J."/>
            <person name="Ramage H.R."/>
            <person name="Satkamp L."/>
            <person name="Newton B."/>
            <person name="Huettenhain R."/>
            <person name="Petit M.J."/>
            <person name="Baum T."/>
            <person name="Everitt A."/>
            <person name="Laufman O."/>
            <person name="Tassetto M."/>
            <person name="Shales M."/>
            <person name="Stevenson E."/>
            <person name="Iglesias G.N."/>
            <person name="Shokat L."/>
            <person name="Tripathi S."/>
            <person name="Balasubramaniam V."/>
            <person name="Webb L.G."/>
            <person name="Aguirre S."/>
            <person name="Willsey A.J."/>
            <person name="Garcia-Sastre A."/>
            <person name="Pollard K.S."/>
            <person name="Cherry S."/>
            <person name="Gamarnik A.V."/>
            <person name="Marazzi I."/>
            <person name="Taunton J."/>
            <person name="Fernandez-Sesma A."/>
            <person name="Bellen H.J."/>
            <person name="Andino R."/>
            <person name="Krogan N.J."/>
        </authorList>
    </citation>
    <scope>INTERACTION WITH HUMAN PAF1 COMPLEX (RNA-DIRECTED RNA POLYMERASE NS5)</scope>
</reference>
<reference key="14">
    <citation type="journal article" date="2021" name="Sci. Rep.">
        <title>Role of PDZ-binding motif from West Nile virus NS5 protein on viral replication.</title>
        <authorList>
            <person name="Giraud E."/>
            <person name="Del Val C.O."/>
            <person name="Caillet-Saguy C."/>
            <person name="Zehrouni N."/>
            <person name="Khou C."/>
            <person name="Caillet J."/>
            <person name="Jacob Y."/>
            <person name="Pardigon N."/>
            <person name="Wolff N."/>
        </authorList>
    </citation>
    <scope>DOMAIN (RNA-DIRECTED RNA POLYMERASE NS5)</scope>
</reference>
<reference key="15">
    <citation type="journal article" date="2006" name="Nat. Struct. Mol. Biol.">
        <title>Structural basis for the activation of flaviviral NS3 proteases from dengue and West Nile virus.</title>
        <authorList>
            <person name="Erbel P."/>
            <person name="Schiering N."/>
            <person name="D'Arcy A."/>
            <person name="Renatus M."/>
            <person name="Kroemer M."/>
            <person name="Lim S.P."/>
            <person name="Yin Z."/>
            <person name="Keller T.H."/>
            <person name="Vasudevan S.G."/>
            <person name="Hommel U."/>
        </authorList>
    </citation>
    <scope>X-RAY CRYSTALLOGRAPHY (1.68 ANGSTROMS) OF 1420-1688</scope>
</reference>
<reference key="16">
    <citation type="journal article" date="2007" name="Protein Sci.">
        <title>Structural evidence for regulation and specificity of flaviviral proteases and evolution of the Flaviviridae fold.</title>
        <authorList>
            <person name="Aleshin A.E."/>
            <person name="Shiryaev S.A."/>
            <person name="Strongin A.Y."/>
            <person name="Liddington R.C."/>
        </authorList>
    </citation>
    <scope>X-RAY CRYSTALLOGRAPHY (1.8 ANGSTROMS) OF 1419-1679</scope>
</reference>
<reference key="17">
    <citation type="journal article" date="2009" name="EMBO J.">
        <title>Structural basis for the preferential recognition of immature flaviviruses by a fusion-loop antibody.</title>
        <authorList>
            <person name="Cherrier M.V."/>
            <person name="Kaufmann B."/>
            <person name="Nybakken G.E."/>
            <person name="Lok S.M."/>
            <person name="Warren J.T."/>
            <person name="Chen B.R."/>
            <person name="Nelson C.A."/>
            <person name="Kostyuchenko V.A."/>
            <person name="Holdaway H.A."/>
            <person name="Chipman P.R."/>
            <person name="Kuhn R.J."/>
            <person name="Diamond M.S."/>
            <person name="Rossmann M.G."/>
            <person name="Fremont D.H."/>
        </authorList>
    </citation>
    <scope>X-RAY CRYSTALLOGRAPHY (3.0 ANGSTROMS) OF 291-688</scope>
</reference>
<keyword id="KW-0002">3D-structure</keyword>
<keyword id="KW-0007">Acetylation</keyword>
<keyword id="KW-1072">Activation of host autophagy by virus</keyword>
<keyword id="KW-0067">ATP-binding</keyword>
<keyword id="KW-0167">Capsid protein</keyword>
<keyword id="KW-1165">Clathrin-mediated endocytosis of virus by host</keyword>
<keyword id="KW-0165">Cleavage on pair of basic residues</keyword>
<keyword id="KW-1015">Disulfide bond</keyword>
<keyword id="KW-1170">Fusion of virus membrane with host endosomal membrane</keyword>
<keyword id="KW-1168">Fusion of virus membrane with host membrane</keyword>
<keyword id="KW-0325">Glycoprotein</keyword>
<keyword id="KW-0347">Helicase</keyword>
<keyword id="KW-1035">Host cytoplasm</keyword>
<keyword id="KW-1038">Host endoplasmic reticulum</keyword>
<keyword id="KW-1043">Host membrane</keyword>
<keyword id="KW-1048">Host nucleus</keyword>
<keyword id="KW-0945">Host-virus interaction</keyword>
<keyword id="KW-0378">Hydrolase</keyword>
<keyword id="KW-1090">Inhibition of host innate immune response by virus</keyword>
<keyword id="KW-1114">Inhibition of host interferon signaling pathway by virus</keyword>
<keyword id="KW-1096">Inhibition of host JAK1 by virus</keyword>
<keyword id="KW-1105">Inhibition of host STAT1 by virus</keyword>
<keyword id="KW-1106">Inhibition of host STAT2 by virus</keyword>
<keyword id="KW-1112">Inhibition of host TYK2 by virus</keyword>
<keyword id="KW-0922">Interferon antiviral system evasion</keyword>
<keyword id="KW-0472">Membrane</keyword>
<keyword id="KW-0479">Metal-binding</keyword>
<keyword id="KW-0489">Methyltransferase</keyword>
<keyword id="KW-0506">mRNA capping</keyword>
<keyword id="KW-0507">mRNA processing</keyword>
<keyword id="KW-0511">Multifunctional enzyme</keyword>
<keyword id="KW-0547">Nucleotide-binding</keyword>
<keyword id="KW-0548">Nucleotidyltransferase</keyword>
<keyword id="KW-0597">Phosphoprotein</keyword>
<keyword id="KW-0645">Protease</keyword>
<keyword id="KW-0694">RNA-binding</keyword>
<keyword id="KW-0696">RNA-directed RNA polymerase</keyword>
<keyword id="KW-0949">S-adenosyl-L-methionine</keyword>
<keyword id="KW-0964">Secreted</keyword>
<keyword id="KW-0720">Serine protease</keyword>
<keyword id="KW-0941">Suppressor of RNA silencing</keyword>
<keyword id="KW-0804">Transcription</keyword>
<keyword id="KW-0805">Transcription regulation</keyword>
<keyword id="KW-0808">Transferase</keyword>
<keyword id="KW-0812">Transmembrane</keyword>
<keyword id="KW-1133">Transmembrane helix</keyword>
<keyword id="KW-1161">Viral attachment to host cell</keyword>
<keyword id="KW-0261">Viral envelope protein</keyword>
<keyword id="KW-0899">Viral immunoevasion</keyword>
<keyword id="KW-1162">Viral penetration into host cytoplasm</keyword>
<keyword id="KW-0693">Viral RNA replication</keyword>
<keyword id="KW-0946">Virion</keyword>
<keyword id="KW-1164">Virus endocytosis by host</keyword>
<keyword id="KW-1160">Virus entry into host cell</keyword>
<keyword id="KW-0862">Zinc</keyword>
<feature type="chain" id="PRO_0000441418" description="Genome polyprotein">
    <location>
        <begin position="1"/>
        <end position="3430"/>
    </location>
</feature>
<feature type="chain" id="PRO_0000037743" description="Capsid protein C" evidence="18">
    <location>
        <begin position="1"/>
        <end position="105"/>
    </location>
</feature>
<feature type="propeptide" id="PRO_0000037744" description="ER anchor for the capsid protein C, removed in mature form by serine protease NS3" evidence="18">
    <location>
        <begin position="106"/>
        <end position="123"/>
    </location>
</feature>
<feature type="chain" id="PRO_0000405150" description="Protein prM" evidence="18">
    <location>
        <begin position="124"/>
        <end position="290"/>
    </location>
</feature>
<feature type="chain" id="PRO_0000405151" description="Peptide pr" evidence="18">
    <location>
        <begin position="124"/>
        <end position="215"/>
    </location>
</feature>
<feature type="chain" id="PRO_0000037745" description="Small envelope protein M" evidence="18">
    <location>
        <begin position="216"/>
        <end position="290"/>
    </location>
</feature>
<feature type="chain" id="PRO_0000037746" description="Envelope protein E" evidence="18">
    <location>
        <begin position="291"/>
        <end position="787"/>
    </location>
</feature>
<feature type="chain" id="PRO_0000037747" description="Non-structural protein 1" evidence="18">
    <location>
        <begin position="788"/>
        <end position="1139"/>
    </location>
</feature>
<feature type="chain" id="PRO_0000037748" description="Non-structural protein 2A" evidence="18">
    <location>
        <begin position="1140"/>
        <end position="1370"/>
    </location>
</feature>
<feature type="chain" id="PRO_0000037749" description="Serine protease subunit NS2B" evidence="18">
    <location>
        <begin position="1371"/>
        <end position="1501"/>
    </location>
</feature>
<feature type="chain" id="PRO_0000037750" description="Serine protease/Helicase NS3" evidence="18">
    <location>
        <begin position="1502"/>
        <end position="2120"/>
    </location>
</feature>
<feature type="chain" id="PRO_0000037751" description="Non-structural protein 4A" evidence="18">
    <location>
        <begin position="2121"/>
        <end position="2246"/>
    </location>
</feature>
<feature type="peptide" id="PRO_0000405152" description="Peptide 2k" evidence="18">
    <location>
        <begin position="2247"/>
        <end position="2269"/>
    </location>
</feature>
<feature type="chain" id="PRO_0000037752" description="Non-structural protein 4B" evidence="18">
    <location>
        <begin position="2270"/>
        <end position="2525"/>
    </location>
</feature>
<feature type="chain" id="PRO_0000037753" description="RNA-directed RNA polymerase NS5" evidence="18">
    <location>
        <begin position="2526"/>
        <end position="3430"/>
    </location>
</feature>
<feature type="topological domain" description="Cytoplasmic" evidence="10">
    <location>
        <begin position="2"/>
        <end position="105"/>
    </location>
</feature>
<feature type="transmembrane region" description="Helical" evidence="10">
    <location>
        <begin position="106"/>
        <end position="126"/>
    </location>
</feature>
<feature type="topological domain" description="Extracellular" evidence="10">
    <location>
        <begin position="127"/>
        <end position="248"/>
    </location>
</feature>
<feature type="transmembrane region" description="Helical" evidence="10">
    <location>
        <begin position="249"/>
        <end position="269"/>
    </location>
</feature>
<feature type="topological domain" description="Cytoplasmic" evidence="10">
    <location>
        <begin position="270"/>
        <end position="275"/>
    </location>
</feature>
<feature type="transmembrane region" description="Helical" evidence="27">
    <location>
        <begin position="276"/>
        <end position="290"/>
    </location>
</feature>
<feature type="topological domain" description="Extracellular" evidence="10">
    <location>
        <begin position="291"/>
        <end position="739"/>
    </location>
</feature>
<feature type="transmembrane region" description="Helical" evidence="10">
    <location>
        <begin position="740"/>
        <end position="760"/>
    </location>
</feature>
<feature type="topological domain" description="Cytoplasmic" evidence="10">
    <location>
        <begin position="761"/>
        <end position="766"/>
    </location>
</feature>
<feature type="transmembrane region" description="Helical" evidence="10">
    <location>
        <begin position="767"/>
        <end position="787"/>
    </location>
</feature>
<feature type="topological domain" description="Extracellular" evidence="10">
    <location>
        <begin position="788"/>
        <end position="1212"/>
    </location>
</feature>
<feature type="transmembrane region" description="Helical" evidence="10">
    <location>
        <begin position="1213"/>
        <end position="1233"/>
    </location>
</feature>
<feature type="topological domain" description="Cytoplasmic" evidence="10">
    <location>
        <begin position="1234"/>
        <end position="1243"/>
    </location>
</feature>
<feature type="transmembrane region" description="Helical" evidence="10">
    <location>
        <begin position="1244"/>
        <end position="1264"/>
    </location>
</feature>
<feature type="topological domain" description="Lumenal" evidence="10">
    <location>
        <begin position="1265"/>
        <end position="1278"/>
    </location>
</feature>
<feature type="transmembrane region" description="Helical" evidence="10">
    <location>
        <begin position="1279"/>
        <end position="1299"/>
    </location>
</feature>
<feature type="topological domain" description="Cytoplasmic" evidence="10">
    <location>
        <begin position="1300"/>
        <end position="1307"/>
    </location>
</feature>
<feature type="transmembrane region" description="Helical" evidence="10">
    <location>
        <begin position="1308"/>
        <end position="1328"/>
    </location>
</feature>
<feature type="topological domain" description="Lumenal" evidence="10">
    <location>
        <begin position="1329"/>
        <end position="1340"/>
    </location>
</feature>
<feature type="transmembrane region" description="Helical" evidence="10">
    <location>
        <begin position="1341"/>
        <end position="1361"/>
    </location>
</feature>
<feature type="topological domain" description="Cytoplasmic" evidence="10">
    <location>
        <begin position="1362"/>
        <end position="1371"/>
    </location>
</feature>
<feature type="transmembrane region" description="Helical" evidence="10">
    <location>
        <begin position="1372"/>
        <end position="1392"/>
    </location>
</feature>
<feature type="topological domain" description="Lumenal" evidence="10">
    <location>
        <begin position="1393"/>
        <end position="1395"/>
    </location>
</feature>
<feature type="transmembrane region" description="Helical" evidence="10">
    <location>
        <begin position="1396"/>
        <end position="1416"/>
    </location>
</feature>
<feature type="topological domain" description="Cytoplasmic" evidence="10">
    <location>
        <begin position="1417"/>
        <end position="1473"/>
    </location>
</feature>
<feature type="intramembrane region" description="Helical" evidence="10">
    <location>
        <begin position="1474"/>
        <end position="1494"/>
    </location>
</feature>
<feature type="topological domain" description="Cytoplasmic" evidence="10">
    <location>
        <begin position="1495"/>
        <end position="2170"/>
    </location>
</feature>
<feature type="transmembrane region" description="Helical" evidence="10">
    <location>
        <begin position="2171"/>
        <end position="2191"/>
    </location>
</feature>
<feature type="topological domain" description="Lumenal" evidence="10">
    <location>
        <begin position="2192"/>
        <end position="2196"/>
    </location>
</feature>
<feature type="intramembrane region" description="Helical" evidence="10">
    <location>
        <begin position="2197"/>
        <end position="2217"/>
    </location>
</feature>
<feature type="topological domain" description="Lumenal" evidence="10">
    <location>
        <position position="2218"/>
    </location>
</feature>
<feature type="transmembrane region" description="Helical" evidence="10">
    <location>
        <begin position="2219"/>
        <end position="2239"/>
    </location>
</feature>
<feature type="topological domain" description="Cytoplasmic" evidence="10">
    <location>
        <begin position="2240"/>
        <end position="2254"/>
    </location>
</feature>
<feature type="transmembrane region" description="Helical; Note=Signal for NS4B" evidence="10">
    <location>
        <begin position="2255"/>
        <end position="2275"/>
    </location>
</feature>
<feature type="topological domain" description="Lumenal" evidence="10">
    <location>
        <begin position="2276"/>
        <end position="2309"/>
    </location>
</feature>
<feature type="intramembrane region" description="Helical" evidence="10">
    <location>
        <begin position="2310"/>
        <end position="2330"/>
    </location>
</feature>
<feature type="topological domain" description="Lumenal" evidence="10">
    <location>
        <begin position="2331"/>
        <end position="2377"/>
    </location>
</feature>
<feature type="transmembrane region" description="Helical" evidence="10">
    <location>
        <begin position="2378"/>
        <end position="2398"/>
    </location>
</feature>
<feature type="topological domain" description="Cytoplasmic" evidence="10">
    <location>
        <begin position="2399"/>
        <end position="2441"/>
    </location>
</feature>
<feature type="transmembrane region" description="Helical" evidence="10">
    <location>
        <begin position="2442"/>
        <end position="2462"/>
    </location>
</feature>
<feature type="topological domain" description="Lumenal" evidence="10">
    <location>
        <begin position="2463"/>
        <end position="2467"/>
    </location>
</feature>
<feature type="transmembrane region" description="Helical" evidence="10">
    <location>
        <begin position="2468"/>
        <end position="2488"/>
    </location>
</feature>
<feature type="topological domain" description="Cytoplasmic" evidence="10">
    <location>
        <begin position="2489"/>
        <end position="3430"/>
    </location>
</feature>
<feature type="domain" description="Peptidase S7" evidence="15">
    <location>
        <begin position="1502"/>
        <end position="1679"/>
    </location>
</feature>
<feature type="domain" description="Helicase ATP-binding" evidence="12">
    <location>
        <begin position="1682"/>
        <end position="1838"/>
    </location>
</feature>
<feature type="domain" description="Helicase C-terminal" evidence="13">
    <location>
        <begin position="1849"/>
        <end position="2014"/>
    </location>
</feature>
<feature type="domain" description="mRNA cap 0-1 NS5-type MT" evidence="16">
    <location>
        <begin position="2526"/>
        <end position="2791"/>
    </location>
</feature>
<feature type="domain" description="RdRp catalytic" evidence="11">
    <location>
        <begin position="3055"/>
        <end position="3207"/>
    </location>
</feature>
<feature type="region of interest" description="Interaction with host EXOC1" evidence="20">
    <location>
        <begin position="2"/>
        <end position="15"/>
    </location>
</feature>
<feature type="region of interest" description="Hydrophobic; homodimerization of capsid protein C" evidence="6">
    <location>
        <begin position="37"/>
        <end position="72"/>
    </location>
</feature>
<feature type="region of interest" description="Fusion peptide" evidence="3">
    <location>
        <begin position="388"/>
        <end position="401"/>
    </location>
</feature>
<feature type="region of interest" description="Interacts with and activates NS3 protease" evidence="14">
    <location>
        <begin position="1424"/>
        <end position="1463"/>
    </location>
</feature>
<feature type="region of interest" description="Important for RNA-binding" evidence="4">
    <location>
        <begin position="1686"/>
        <end position="1689"/>
    </location>
</feature>
<feature type="region of interest" description="Regulates the ATPase activity of NS3 helicase" evidence="9">
    <location>
        <begin position="2165"/>
        <end position="2169"/>
    </location>
</feature>
<feature type="short sequence motif" description="DEAH box" evidence="12">
    <location>
        <begin position="1786"/>
        <end position="1789"/>
    </location>
</feature>
<feature type="short sequence motif" description="Nuclear localization signal" evidence="2">
    <location>
        <begin position="2914"/>
        <end position="2916"/>
    </location>
</feature>
<feature type="short sequence motif" description="PDZ-binding" evidence="24">
    <location>
        <begin position="3428"/>
        <end position="3430"/>
    </location>
</feature>
<feature type="active site" description="Charge relay system; for serine protease NS3 activity" evidence="15">
    <location>
        <position position="1552"/>
    </location>
</feature>
<feature type="active site" description="Charge relay system; for serine protease NS3 activity" evidence="15">
    <location>
        <position position="1576"/>
    </location>
</feature>
<feature type="active site" description="Charge relay system; for serine protease NS3 activity" evidence="15">
    <location>
        <position position="1636"/>
    </location>
</feature>
<feature type="active site" description="For 2'-O-MTase activity" evidence="8">
    <location>
        <position position="2586"/>
    </location>
</feature>
<feature type="active site" description="For 2'-O-MTase activity" evidence="8">
    <location>
        <position position="2671"/>
    </location>
</feature>
<feature type="active site" description="For 2'-O-MTase activity" evidence="8">
    <location>
        <position position="2707"/>
    </location>
</feature>
<feature type="active site" description="For 2'-O-MTase activity" evidence="8">
    <location>
        <position position="2743"/>
    </location>
</feature>
<feature type="binding site" evidence="12">
    <location>
        <begin position="1695"/>
        <end position="1702"/>
    </location>
    <ligand>
        <name>ATP</name>
        <dbReference type="ChEBI" id="CHEBI:30616"/>
    </ligand>
</feature>
<feature type="binding site" evidence="16">
    <location>
        <position position="2581"/>
    </location>
    <ligand>
        <name>S-adenosyl-L-methionine</name>
        <dbReference type="ChEBI" id="CHEBI:59789"/>
    </ligand>
</feature>
<feature type="binding site" evidence="16">
    <location>
        <position position="2611"/>
    </location>
    <ligand>
        <name>S-adenosyl-L-methionine</name>
        <dbReference type="ChEBI" id="CHEBI:59789"/>
    </ligand>
</feature>
<feature type="binding site" evidence="16">
    <location>
        <position position="2612"/>
    </location>
    <ligand>
        <name>S-adenosyl-L-methionine</name>
        <dbReference type="ChEBI" id="CHEBI:59789"/>
    </ligand>
</feature>
<feature type="binding site" evidence="16">
    <location>
        <position position="2629"/>
    </location>
    <ligand>
        <name>S-adenosyl-L-methionine</name>
        <dbReference type="ChEBI" id="CHEBI:59789"/>
    </ligand>
</feature>
<feature type="binding site" evidence="16">
    <location>
        <position position="2630"/>
    </location>
    <ligand>
        <name>S-adenosyl-L-methionine</name>
        <dbReference type="ChEBI" id="CHEBI:59789"/>
    </ligand>
</feature>
<feature type="binding site" evidence="16">
    <location>
        <position position="2656"/>
    </location>
    <ligand>
        <name>S-adenosyl-L-methionine</name>
        <dbReference type="ChEBI" id="CHEBI:59789"/>
    </ligand>
</feature>
<feature type="binding site" evidence="16">
    <location>
        <position position="2657"/>
    </location>
    <ligand>
        <name>S-adenosyl-L-methionine</name>
        <dbReference type="ChEBI" id="CHEBI:59789"/>
    </ligand>
</feature>
<feature type="binding site" evidence="16">
    <location>
        <position position="2672"/>
    </location>
    <ligand>
        <name>S-adenosyl-L-methionine</name>
        <dbReference type="ChEBI" id="CHEBI:59789"/>
    </ligand>
</feature>
<feature type="binding site" evidence="16">
    <location>
        <position position="2745"/>
    </location>
    <ligand>
        <name>S-adenosyl-L-methionine</name>
        <dbReference type="ChEBI" id="CHEBI:59789"/>
    </ligand>
</feature>
<feature type="binding site" evidence="2">
    <location>
        <position position="2965"/>
    </location>
    <ligand>
        <name>Zn(2+)</name>
        <dbReference type="ChEBI" id="CHEBI:29105"/>
        <label>1</label>
    </ligand>
</feature>
<feature type="binding site" evidence="2">
    <location>
        <position position="2969"/>
    </location>
    <ligand>
        <name>Zn(2+)</name>
        <dbReference type="ChEBI" id="CHEBI:29105"/>
        <label>1</label>
    </ligand>
</feature>
<feature type="binding site" evidence="2">
    <location>
        <position position="2974"/>
    </location>
    <ligand>
        <name>Zn(2+)</name>
        <dbReference type="ChEBI" id="CHEBI:29105"/>
        <label>1</label>
    </ligand>
</feature>
<feature type="binding site" evidence="2">
    <location>
        <position position="2977"/>
    </location>
    <ligand>
        <name>Zn(2+)</name>
        <dbReference type="ChEBI" id="CHEBI:29105"/>
        <label>1</label>
    </ligand>
</feature>
<feature type="binding site" evidence="2">
    <location>
        <position position="3242"/>
    </location>
    <ligand>
        <name>Zn(2+)</name>
        <dbReference type="ChEBI" id="CHEBI:29105"/>
        <label>2</label>
    </ligand>
</feature>
<feature type="binding site" evidence="2">
    <location>
        <position position="3258"/>
    </location>
    <ligand>
        <name>Zn(2+)</name>
        <dbReference type="ChEBI" id="CHEBI:29105"/>
        <label>2</label>
    </ligand>
</feature>
<feature type="binding site" evidence="2">
    <location>
        <position position="3377"/>
    </location>
    <ligand>
        <name>Zn(2+)</name>
        <dbReference type="ChEBI" id="CHEBI:29105"/>
        <label>2</label>
    </ligand>
</feature>
<feature type="site" description="Cleavage; by viral protease NS3" evidence="18">
    <location>
        <begin position="105"/>
        <end position="106"/>
    </location>
</feature>
<feature type="site" description="Cleavage; by host signal peptidase" evidence="18">
    <location>
        <begin position="123"/>
        <end position="124"/>
    </location>
</feature>
<feature type="site" description="Cleavage; by host furin" evidence="26">
    <location>
        <begin position="215"/>
        <end position="216"/>
    </location>
</feature>
<feature type="site" description="Cleavage; by host signal peptidase" evidence="26">
    <location>
        <begin position="290"/>
        <end position="291"/>
    </location>
</feature>
<feature type="site" description="Cleavage; by host signal peptidase" evidence="26">
    <location>
        <begin position="787"/>
        <end position="788"/>
    </location>
</feature>
<feature type="site" description="Cleavage; by host" evidence="26">
    <location>
        <begin position="1139"/>
        <end position="1140"/>
    </location>
</feature>
<feature type="site" description="Cleavage; by viral protease NS3" evidence="18">
    <location>
        <begin position="1370"/>
        <end position="1371"/>
    </location>
</feature>
<feature type="site" description="Cleavage; by autolysis" evidence="18">
    <location>
        <begin position="1501"/>
        <end position="1502"/>
    </location>
</feature>
<feature type="site" description="Involved in NS3 ATPase and RTPase activities" evidence="2">
    <location>
        <position position="1959"/>
    </location>
</feature>
<feature type="site" description="Involved in NS3 ATPase and RTPase activities" evidence="2">
    <location>
        <position position="1962"/>
    </location>
</feature>
<feature type="site" description="Cleavage; by autolysis" evidence="26">
    <location>
        <begin position="2120"/>
        <end position="2121"/>
    </location>
</feature>
<feature type="site" description="Cleavage; by viral protease NS3" evidence="26">
    <location>
        <begin position="2246"/>
        <end position="2247"/>
    </location>
</feature>
<feature type="site" description="Cleavage; by host signal peptidase" evidence="26">
    <location>
        <begin position="2269"/>
        <end position="2270"/>
    </location>
</feature>
<feature type="site" description="Cleavage; by viral protease NS3" evidence="18">
    <location>
        <begin position="2525"/>
        <end position="2526"/>
    </location>
</feature>
<feature type="site" description="mRNA cap binding" evidence="16">
    <location>
        <position position="2538"/>
    </location>
</feature>
<feature type="site" description="mRNA cap binding; via carbonyl oxygen" evidence="16">
    <location>
        <position position="2541"/>
    </location>
</feature>
<feature type="site" description="mRNA cap binding" evidence="16">
    <location>
        <position position="2542"/>
    </location>
</feature>
<feature type="site" description="mRNA cap binding; via carbonyl oxygen" evidence="16">
    <location>
        <position position="2544"/>
    </location>
</feature>
<feature type="site" description="mRNA cap binding" evidence="16 18">
    <location>
        <position position="2549"/>
    </location>
</feature>
<feature type="site" description="mRNA cap binding" evidence="16">
    <location>
        <position position="2553"/>
    </location>
</feature>
<feature type="site" description="Essential for 2'-O-methyltransferase activity" evidence="16">
    <location>
        <position position="2586"/>
    </location>
</feature>
<feature type="site" description="Essential for 2'-O-methyltransferase and N-7 methyltransferase activity" evidence="16">
    <location>
        <position position="2671"/>
    </location>
</feature>
<feature type="site" description="mRNA cap binding" evidence="16">
    <location>
        <position position="2675"/>
    </location>
</feature>
<feature type="site" description="Essential for 2'-O-methyltransferase activity" evidence="16">
    <location>
        <position position="2707"/>
    </location>
</feature>
<feature type="site" description="mRNA cap binding" evidence="16">
    <location>
        <position position="2738"/>
    </location>
</feature>
<feature type="site" description="mRNA cap binding" evidence="16">
    <location>
        <position position="2740"/>
    </location>
</feature>
<feature type="site" description="Essential for 2'-O-methyltransferase activity" evidence="16">
    <location>
        <position position="2743"/>
    </location>
</feature>
<feature type="modified residue" description="N6-acetyllysine; by host" evidence="7">
    <location>
        <position position="1890"/>
    </location>
</feature>
<feature type="modified residue" description="Phosphoserine" evidence="1">
    <location>
        <position position="2581"/>
    </location>
</feature>
<feature type="glycosylation site" description="N-linked (GlcNAc...) asparagine; by host" evidence="2">
    <location>
        <position position="138"/>
    </location>
</feature>
<feature type="glycosylation site" description="N-linked (GlcNAc...) asparagine; by host" evidence="9">
    <location>
        <position position="917"/>
    </location>
</feature>
<feature type="glycosylation site" description="N-linked (GlcNAc...) asparagine; by host" evidence="9">
    <location>
        <position position="962"/>
    </location>
</feature>
<feature type="glycosylation site" description="N-linked (GlcNAc...) asparagine; by host" evidence="9">
    <location>
        <position position="994"/>
    </location>
</feature>
<feature type="disulfide bond" evidence="25">
    <location>
        <begin position="293"/>
        <end position="320"/>
    </location>
</feature>
<feature type="disulfide bond" evidence="25">
    <location>
        <begin position="350"/>
        <end position="406"/>
    </location>
</feature>
<feature type="disulfide bond" evidence="25">
    <location>
        <begin position="364"/>
        <end position="395"/>
    </location>
</feature>
<feature type="disulfide bond" evidence="25">
    <location>
        <begin position="382"/>
        <end position="411"/>
    </location>
</feature>
<feature type="disulfide bond" evidence="25">
    <location>
        <begin position="476"/>
        <end position="574"/>
    </location>
</feature>
<feature type="disulfide bond" evidence="25">
    <location>
        <begin position="591"/>
        <end position="622"/>
    </location>
</feature>
<feature type="disulfide bond" evidence="9">
    <location>
        <begin position="791"/>
        <end position="802"/>
    </location>
</feature>
<feature type="disulfide bond" evidence="9">
    <location>
        <begin position="842"/>
        <end position="930"/>
    </location>
</feature>
<feature type="disulfide bond" evidence="9">
    <location>
        <begin position="966"/>
        <end position="1010"/>
    </location>
</feature>
<feature type="disulfide bond" evidence="9">
    <location>
        <begin position="1067"/>
        <end position="1116"/>
    </location>
</feature>
<feature type="disulfide bond" evidence="9">
    <location>
        <begin position="1078"/>
        <end position="1099"/>
    </location>
</feature>
<feature type="disulfide bond" evidence="9">
    <location>
        <begin position="1100"/>
        <end position="1103"/>
    </location>
</feature>
<feature type="mutagenesis site" description="Loss of interaction between capsid protein C and host EXOC1." evidence="21">
    <original>V</original>
    <variation>A</variation>
    <location>
        <position position="14"/>
    </location>
</feature>
<feature type="mutagenesis site" description="Complete loss of 2'-O-methyltransferase activity. No effect on N-7 methyltransferase activity." evidence="19">
    <original>K</original>
    <variation>A</variation>
    <location>
        <position position="2586"/>
    </location>
</feature>
<feature type="mutagenesis site" description="Lethal for the virus. Complete loss of 2'-O and N-7 methyltransferase activities." evidence="19">
    <original>D</original>
    <variation>A</variation>
    <location>
        <position position="2671"/>
    </location>
</feature>
<feature type="mutagenesis site" description="Complete loss of 2'-O-methyltransferase activity. No effect on N-7 methyltransferase activity." evidence="19">
    <original>K</original>
    <variation>A</variation>
    <location>
        <position position="2707"/>
    </location>
</feature>
<feature type="mutagenesis site" description="Complete loss of 2'-O-methyltransferase activity. No effect on N-7 methyltransferase activity." evidence="19">
    <original>E</original>
    <variation>A</variation>
    <location>
        <position position="2743"/>
    </location>
</feature>
<feature type="strand" evidence="31">
    <location>
        <begin position="595"/>
        <end position="603"/>
    </location>
</feature>
<feature type="strand" evidence="31">
    <location>
        <begin position="605"/>
        <end position="607"/>
    </location>
</feature>
<feature type="strand" evidence="31">
    <location>
        <begin position="609"/>
        <end position="615"/>
    </location>
</feature>
<feature type="strand" evidence="31">
    <location>
        <begin position="621"/>
        <end position="623"/>
    </location>
</feature>
<feature type="strand" evidence="31">
    <location>
        <begin position="626"/>
        <end position="631"/>
    </location>
</feature>
<feature type="strand" evidence="31">
    <location>
        <begin position="634"/>
        <end position="637"/>
    </location>
</feature>
<feature type="strand" evidence="31">
    <location>
        <begin position="639"/>
        <end position="643"/>
    </location>
</feature>
<feature type="strand" evidence="31">
    <location>
        <begin position="657"/>
        <end position="662"/>
    </location>
</feature>
<feature type="strand" evidence="31">
    <location>
        <begin position="665"/>
        <end position="673"/>
    </location>
</feature>
<feature type="strand" evidence="31">
    <location>
        <begin position="679"/>
        <end position="685"/>
    </location>
</feature>
<feature type="strand" evidence="33">
    <location>
        <begin position="1422"/>
        <end position="1428"/>
    </location>
</feature>
<feature type="helix" evidence="29">
    <location>
        <begin position="1434"/>
        <end position="1439"/>
    </location>
</feature>
<feature type="strand" evidence="29">
    <location>
        <begin position="1440"/>
        <end position="1443"/>
    </location>
</feature>
<feature type="strand" evidence="33">
    <location>
        <begin position="1444"/>
        <end position="1449"/>
    </location>
</feature>
<feature type="strand" evidence="32">
    <location>
        <begin position="1451"/>
        <end position="1453"/>
    </location>
</feature>
<feature type="strand" evidence="33">
    <location>
        <begin position="1455"/>
        <end position="1457"/>
    </location>
</feature>
<feature type="strand" evidence="33">
    <location>
        <begin position="1503"/>
        <end position="1505"/>
    </location>
</feature>
<feature type="strand" evidence="33">
    <location>
        <begin position="1521"/>
        <end position="1532"/>
    </location>
</feature>
<feature type="strand" evidence="33">
    <location>
        <begin position="1534"/>
        <end position="1543"/>
    </location>
</feature>
<feature type="strand" evidence="33">
    <location>
        <begin position="1546"/>
        <end position="1549"/>
    </location>
</feature>
<feature type="helix" evidence="33">
    <location>
        <begin position="1551"/>
        <end position="1554"/>
    </location>
</feature>
<feature type="strand" evidence="33">
    <location>
        <begin position="1559"/>
        <end position="1561"/>
    </location>
</feature>
<feature type="strand" evidence="33">
    <location>
        <begin position="1564"/>
        <end position="1566"/>
    </location>
</feature>
<feature type="strand" evidence="33">
    <location>
        <begin position="1568"/>
        <end position="1572"/>
    </location>
</feature>
<feature type="turn" evidence="33">
    <location>
        <begin position="1573"/>
        <end position="1576"/>
    </location>
</feature>
<feature type="strand" evidence="33">
    <location>
        <begin position="1577"/>
        <end position="1583"/>
    </location>
</feature>
<feature type="strand" evidence="33">
    <location>
        <begin position="1592"/>
        <end position="1594"/>
    </location>
</feature>
<feature type="strand" evidence="33">
    <location>
        <begin position="1596"/>
        <end position="1600"/>
    </location>
</feature>
<feature type="strand" evidence="33">
    <location>
        <begin position="1608"/>
        <end position="1612"/>
    </location>
</feature>
<feature type="strand" evidence="33">
    <location>
        <begin position="1615"/>
        <end position="1618"/>
    </location>
</feature>
<feature type="strand" evidence="33">
    <location>
        <begin position="1623"/>
        <end position="1627"/>
    </location>
</feature>
<feature type="helix" evidence="28">
    <location>
        <begin position="1633"/>
        <end position="1635"/>
    </location>
</feature>
<feature type="strand" evidence="33">
    <location>
        <begin position="1639"/>
        <end position="1641"/>
    </location>
</feature>
<feature type="strand" evidence="33">
    <location>
        <begin position="1647"/>
        <end position="1650"/>
    </location>
</feature>
<feature type="strand" evidence="33">
    <location>
        <begin position="1654"/>
        <end position="1656"/>
    </location>
</feature>
<feature type="strand" evidence="33">
    <location>
        <begin position="1662"/>
        <end position="1665"/>
    </location>
</feature>
<feature type="strand" evidence="30">
    <location>
        <begin position="1672"/>
        <end position="1674"/>
    </location>
</feature>
<protein>
    <recommendedName>
        <fullName>Genome polyprotein</fullName>
    </recommendedName>
    <component>
        <recommendedName>
            <fullName>Peptide 2k</fullName>
        </recommendedName>
    </component>
    <component>
        <recommendedName>
            <fullName>Capsid protein C</fullName>
        </recommendedName>
        <alternativeName>
            <fullName>Core protein</fullName>
        </alternativeName>
    </component>
    <component>
        <recommendedName>
            <fullName>Protein prM</fullName>
        </recommendedName>
    </component>
    <component>
        <recommendedName>
            <fullName>Peptide pr</fullName>
        </recommendedName>
    </component>
    <component>
        <recommendedName>
            <fullName>Small envelope protein M</fullName>
        </recommendedName>
        <alternativeName>
            <fullName>Matrix protein</fullName>
        </alternativeName>
    </component>
    <component>
        <recommendedName>
            <fullName>Envelope protein E</fullName>
        </recommendedName>
    </component>
    <component>
        <recommendedName>
            <fullName>Non-structural protein 1</fullName>
            <shortName>NS1</shortName>
        </recommendedName>
    </component>
    <component>
        <recommendedName>
            <fullName>Non-structural protein 2A</fullName>
            <shortName>NS2A</shortName>
        </recommendedName>
    </component>
    <component>
        <recommendedName>
            <fullName>Serine protease subunit NS2B</fullName>
        </recommendedName>
        <alternativeName>
            <fullName>Flavivirin protease NS2B regulatory subunit</fullName>
        </alternativeName>
        <alternativeName>
            <fullName>Non-structural protein 2B</fullName>
        </alternativeName>
    </component>
    <component>
        <recommendedName>
            <fullName>Serine protease/Helicase NS3</fullName>
            <ecNumber>3.4.21.91</ecNumber>
            <ecNumber evidence="9">3.6.1.15</ecNumber>
            <ecNumber evidence="9">3.6.4.13</ecNumber>
        </recommendedName>
        <alternativeName>
            <fullName>Flavivirin protease NS3 catalytic subunit</fullName>
        </alternativeName>
        <alternativeName>
            <fullName>Non-structural protein 3</fullName>
        </alternativeName>
    </component>
    <component>
        <recommendedName>
            <fullName>Non-structural protein 4A</fullName>
            <shortName>NS4A</shortName>
        </recommendedName>
    </component>
    <component>
        <recommendedName>
            <fullName>Non-structural protein 4B</fullName>
            <shortName>NS4B</shortName>
        </recommendedName>
    </component>
    <component>
        <recommendedName>
            <fullName>RNA-directed RNA polymerase NS5</fullName>
            <ecNumber evidence="16">2.1.1.56</ecNumber>
            <ecNumber evidence="16">2.1.1.57</ecNumber>
            <ecNumber evidence="11">2.7.7.48</ecNumber>
        </recommendedName>
        <alternativeName>
            <fullName>NS5</fullName>
        </alternativeName>
    </component>
</protein>
<sequence length="3430" mass="380110">MSKKPGGPGKNRAVNMLKRGMPRGLSLIGLKRAMLSLIDGKGPIRFVLALLAFFRFTAIAPTRAVLDRWRGVNKQTAMKHLLSFKKELGTLTSAINRRSTKQKKRGGTAGFTILLGLIACAGAVTLSNFQGKVMMTVNATDVTDVITIPTAAGKNLCIVRAMDVGYLCEDTITYECPVLAAGNDPEDIDCWCTKSSVYVRYGRCTKTRHSRRSRRSLTVQTHGESTLANKKGAWLDSTKATRYLVKTESWILRNPGYALVAAVIGWMLGSNTMQRVVFAILLLLVAPAYSFNCLGMSNRDFLEGVSGATWVDLVLEGDSCVTIMSKDKPTIDVKMMNMEAANLADVRSYCYLASVSDLSTRAACPTMGEAHNEKRADPAFVCKQGVVDRGWGNGCGLFGKGSIDTCAKFACTTKATGWIIQKENIKYEVAIFVHGPTTVESHGKIGATQAGRFSITPSAPSYTLKLGEYGEVTVDCEPRSGIDTSAYYVMSVGEKSFLVHREWFMDLNLPWSSAGSTTWRNRETLMEFEEPHATKQSVVALGSQEGALHQALAGAIPVEFSSNTVKLTSGHLKCRVKMEKLQLKGTTYGVCSKAFKFARTPADTGHGTVVLELQYTGTDGPCKVPISSVASLNDLTPVGRLVTVNPFVSVATANSKVLIELEPPFGDSYIVVGRGEQQINHHWHKSGSSIGKAFTTTLRGAQRLAALGDTAWDFGSVGGVFTSVGKAIHQVFGGAFRSLFGGMSWITQGLLGALLLWMGINARDRSIAMTFLAVGGVLLFLSVNVHADTGCAIDIGRQELRCGSGVFIHNDVEAWMDRYKFYPETPQGLAKIIQKAHAEGVCGLRSVSRLEHQMWEAIKDELNTLLKENGVDLSVVVEKQNGMYKAAPKRLAATTEKLEMGWKAWGKSIIFAPELANNTFVIDGPETEECPTANRAWNSMEVEDFGFGLTSTRMFLRIRETNTTECDSKIIGTAVKNNMAVHSDLSYWIESGLNDTWKLERAVLGEVKSCTWPETHTLWGDGVLESDLIIPITLAGPRSNHNRRPGYKTQNQGPWDEGRVEIDFDYCPGTTVTISDSCEHRGPAARTTTESGKLITDWCCRSCTLPPLRFQTENGCWYGMEIRPTRHDEKTLVQSRVNAYNADMIDPFQLGLMVVFLATQEVLRKRWTAKISIPAIMLALLVLVFGGITYTDVLRYVILVGAAFAEANSGGDVVHLALMATFKIQPVFLVASFLKARWTNQESILLMLAAAFFQMAYYDAKNVLSWEVPDVLNSLSVAWMILRAISFTNTSNVVVPLLALLTPGLKCLNLDVYRILLLMVGVGSLIKEKRSSAAKKKGACLICLALASTGVFNPMILAAGLMACDPNRKRGWPATEVMTAVGLMFAIVGGLAELDIDSMAIPMTIAGLMFAAFVISGKSTDMWIERTADITWESDAEITGSSERVDVRLDDDGNFQLMNDPGAPWKIWMLRMACLAISAYTPWAILPSVIGFWITLQYTKRGGVLWDTPSPKEYKKGDTTTGVYRIMTRGLLGSYQAGAGVMVEGVFHTLWHTTKGAALMSGEGRLDPYWGSVKEDRLCYGGPWKLQHKWNGHDEVQMIVVEPGKNVKNVQTKPGVFKTPEGEIGAVTLDYPTGTSGSPIVDKNGDVIGLYGNGVIMPNGSYISAIVQGERMEEPAPAGFEPEMLRKKQITVLDLHPGAGKTRKILPQIIKEAINKRLRTAVLAPTRVVAAEMSEALRGLPIRYQTSAVHREHSGNEIVDVMCHATLTHRLMSPHRVPNYNLFIMDEAHFTDPASIAARGYIATKVELGEAAAIFMTATPPGTSDPFPESNAPISDMQTEIPDRAWNTGYEWITEYVGKTVWFVPSVKMGNEIALCLQRAGKKVIQLNRKSYETEYPKCKNDDWDFVITTDISEMGANFKASRVIDSRKSVKPTIIEEGDGRVILGEPSAITAASAAQRRGRIGRNPSQVGDEYCYGGHTNEDDSNFAHWTEARIMLDNINMPNGLVAQLYQPEREKVYTMDGEYRLRGEERKNFLEFLRTADLPVWLAYKVAAAGISYHDRKWCFDGPRTNTILEDNNEVEVITKLGERKILRPRWADARVYSDHQALKSFKDFASGKRSQIGLVEVLGRMPEHFMVKTWEALDTMYVVATAEKGGRAHRMALEELPDALQTIVLIALLSVMSLGVFFLLMQRKGIGKIGLGGVILGAATFFCWMAEVPGTKIAGMLLLSLLLMIVLIPEPEKQRSQTDNQLAVFLICVLTLVGAVAANEMGWLDKTKNDIGSLLGHRPEARETTLGVESFLLDLRPATAWSLYAVTTAVLTPLLKHLITSDYINTSLTSINVQASALFTLARGFPFVDVGVSALLLAVGCWGQVTLTVTVTAAALLFCHYAYMVPGWQAEAMRSAQRRTAAGIMKNVVVDGIVATDVPELERTTPVMQKKVGQIILILVSMAAVVVNPSVRTVREAGILTTAAAVTLWENGASSVWNATTAIGLCHIMRGGWLSCLSIMWTLIKNMEKPGLKRGGAKGRTLGEVWKERLNHMTKEEFTRYRKEAITEVDRSAAKHARREGNITGGHPVSRGTAKLRWLVERRFLEPVGKVVDLGCGRGGWCYYMATQKRVQEVKGYTKGGPGHEEPQLVQSYGWNIVTMKSGVDVFYRPSEASDTLLCDIGESSSSAEVEEHRTVRVLEMVEDWLHRGPKEFCIKVLCPYMPKVIEKMETLQRRYGGGLIRNPLSRNSTHEMYWVSHASGNIVHSVNMTSQVLLGRMEKKTWKGPQFEEDVNLGSGTRAVGKPLLNSDTSKIKNRIERLKKEYSSTWHQDANHPYRTWNYHGSYEVKPTGSASSLVNGVVRLLSKPWDTITNVTTMAMTDTTPFGQQRVFKEKVDTKAPEPPEGVKYVLNETTNWLWAFLARDKKPRMCSREEFIGKVNSNAALGAMFEEQNQWKNAREAVEDPKFWEMVDEEREAHLRGECNTCIYNMMGKREKKPGEFGKAKGSRAIWFMWLGARFLEFEALGFLNEDHWLGRKNSGGGVEGLGLQKLGYILKEVGTKPGGKVYADDTAGWDTRITKADLENEAKVLELLDGEHRRLARSIIELTYRHKVVKVMRPAADGKTVMDVISREDQRGSGQVVTYALNTFTNLAVQLVRMMEGEGVIGPDDVEKLGKGKGPKVRTWLFENGEERLSRMAVSGDDCVVKPLDDRFATSLHFLNAMSKVRKDIQEWKPSTGWYDWQQVPFCSNHFTELIMKDGRTLVVPCRGQDELIGRARISPGAGWNVRDTACLAKSYAQMWLLLYFHRRDLRLMANAICSAVPANWVPTGRTTWSIHAKGEWMTTEDMLAVWNRVWIEENEWMEDKTPVERWSDVPYSGKREDIWCGSLIGTRTRATWAENIHVAINQVRSVIGEEKYVDYMSSLRRYEDTIVVEDTVL</sequence>
<name>POLG_WNV</name>
<accession>P06935</accession>
<dbReference type="EC" id="3.4.21.91"/>
<dbReference type="EC" id="3.6.1.15" evidence="9"/>
<dbReference type="EC" id="3.6.4.13" evidence="9"/>
<dbReference type="EC" id="2.1.1.56" evidence="16"/>
<dbReference type="EC" id="2.1.1.57" evidence="16"/>
<dbReference type="EC" id="2.7.7.48" evidence="11"/>
<dbReference type="EMBL" id="M12294">
    <property type="protein sequence ID" value="AAA48498.2"/>
    <property type="molecule type" value="Genomic_RNA"/>
</dbReference>
<dbReference type="PIR" id="A25256">
    <property type="entry name" value="GNWVWV"/>
</dbReference>
<dbReference type="RefSeq" id="NP_041724.2">
    <property type="nucleotide sequence ID" value="NC_001563.2"/>
</dbReference>
<dbReference type="PDB" id="2FP7">
    <property type="method" value="X-ray"/>
    <property type="resolution" value="1.68 A"/>
    <property type="chains" value="A=1420-1466, B=1517-1688"/>
</dbReference>
<dbReference type="PDB" id="2GGV">
    <property type="method" value="X-ray"/>
    <property type="resolution" value="1.80 A"/>
    <property type="chains" value="A=1419-1525, B=1503-1679"/>
</dbReference>
<dbReference type="PDB" id="2IJO">
    <property type="method" value="X-ray"/>
    <property type="resolution" value="2.30 A"/>
    <property type="chains" value="A=1419-1482, B=1502-1685"/>
</dbReference>
<dbReference type="PDB" id="2P5P">
    <property type="method" value="X-ray"/>
    <property type="resolution" value="2.80 A"/>
    <property type="chains" value="A/B/C=585-701"/>
</dbReference>
<dbReference type="PDB" id="2YOL">
    <property type="method" value="X-ray"/>
    <property type="resolution" value="3.20 A"/>
    <property type="chains" value="A=1420-1465, A=1502-1671"/>
</dbReference>
<dbReference type="PDB" id="3E90">
    <property type="method" value="X-ray"/>
    <property type="resolution" value="2.45 A"/>
    <property type="chains" value="A/C=1420-1463, B/D=1502-1685"/>
</dbReference>
<dbReference type="PDB" id="3I50">
    <property type="method" value="X-ray"/>
    <property type="resolution" value="3.00 A"/>
    <property type="chains" value="E=291-688"/>
</dbReference>
<dbReference type="PDB" id="5IDK">
    <property type="method" value="X-ray"/>
    <property type="resolution" value="1.50 A"/>
    <property type="chains" value="A/B/C=1420-1465"/>
</dbReference>
<dbReference type="PDBsum" id="2FP7"/>
<dbReference type="PDBsum" id="2GGV"/>
<dbReference type="PDBsum" id="2IJO"/>
<dbReference type="PDBsum" id="2P5P"/>
<dbReference type="PDBsum" id="2YOL"/>
<dbReference type="PDBsum" id="3E90"/>
<dbReference type="PDBsum" id="3I50"/>
<dbReference type="PDBsum" id="5IDK"/>
<dbReference type="BMRB" id="P06935"/>
<dbReference type="SMR" id="P06935"/>
<dbReference type="IntAct" id="P06935">
    <property type="interactions" value="4"/>
</dbReference>
<dbReference type="BindingDB" id="P06935"/>
<dbReference type="ChEMBL" id="CHEMBL5419"/>
<dbReference type="MEROPS" id="S07.003"/>
<dbReference type="ABCD" id="P06935">
    <property type="antibodies" value="11 sequenced antibodies"/>
</dbReference>
<dbReference type="GeneID" id="912267"/>
<dbReference type="KEGG" id="vg:912267"/>
<dbReference type="BRENDA" id="2.7.7.48">
    <property type="organism ID" value="6687"/>
</dbReference>
<dbReference type="BRENDA" id="3.4.21.91">
    <property type="organism ID" value="6687"/>
</dbReference>
<dbReference type="EvolutionaryTrace" id="P06935"/>
<dbReference type="PRO" id="PR:P06935"/>
<dbReference type="Proteomes" id="UP000008600">
    <property type="component" value="Genome"/>
</dbReference>
<dbReference type="GO" id="GO:0005576">
    <property type="term" value="C:extracellular region"/>
    <property type="evidence" value="ECO:0007669"/>
    <property type="project" value="UniProtKB-SubCell"/>
</dbReference>
<dbReference type="GO" id="GO:0044167">
    <property type="term" value="C:host cell endoplasmic reticulum membrane"/>
    <property type="evidence" value="ECO:0007669"/>
    <property type="project" value="UniProtKB-SubCell"/>
</dbReference>
<dbReference type="GO" id="GO:0042025">
    <property type="term" value="C:host cell nucleus"/>
    <property type="evidence" value="ECO:0007669"/>
    <property type="project" value="UniProtKB-SubCell"/>
</dbReference>
<dbReference type="GO" id="GO:0044220">
    <property type="term" value="C:host cell perinuclear region of cytoplasm"/>
    <property type="evidence" value="ECO:0007669"/>
    <property type="project" value="UniProtKB-SubCell"/>
</dbReference>
<dbReference type="GO" id="GO:0016020">
    <property type="term" value="C:membrane"/>
    <property type="evidence" value="ECO:0007669"/>
    <property type="project" value="UniProtKB-KW"/>
</dbReference>
<dbReference type="GO" id="GO:0032993">
    <property type="term" value="C:protein-DNA complex"/>
    <property type="evidence" value="ECO:0000315"/>
    <property type="project" value="CAFA"/>
</dbReference>
<dbReference type="GO" id="GO:1990904">
    <property type="term" value="C:ribonucleoprotein complex"/>
    <property type="evidence" value="ECO:0000315"/>
    <property type="project" value="CAFA"/>
</dbReference>
<dbReference type="GO" id="GO:0019028">
    <property type="term" value="C:viral capsid"/>
    <property type="evidence" value="ECO:0007669"/>
    <property type="project" value="UniProtKB-KW"/>
</dbReference>
<dbReference type="GO" id="GO:0019031">
    <property type="term" value="C:viral envelope"/>
    <property type="evidence" value="ECO:0007669"/>
    <property type="project" value="UniProtKB-KW"/>
</dbReference>
<dbReference type="GO" id="GO:0055036">
    <property type="term" value="C:virion membrane"/>
    <property type="evidence" value="ECO:0007669"/>
    <property type="project" value="UniProtKB-SubCell"/>
</dbReference>
<dbReference type="GO" id="GO:0005524">
    <property type="term" value="F:ATP binding"/>
    <property type="evidence" value="ECO:0007669"/>
    <property type="project" value="UniProtKB-KW"/>
</dbReference>
<dbReference type="GO" id="GO:0016887">
    <property type="term" value="F:ATP hydrolysis activity"/>
    <property type="evidence" value="ECO:0007669"/>
    <property type="project" value="RHEA"/>
</dbReference>
<dbReference type="GO" id="GO:0003677">
    <property type="term" value="F:DNA binding"/>
    <property type="evidence" value="ECO:0000315"/>
    <property type="project" value="CAFA"/>
</dbReference>
<dbReference type="GO" id="GO:1990814">
    <property type="term" value="F:DNA/DNA annealing activity"/>
    <property type="evidence" value="ECO:0000315"/>
    <property type="project" value="CAFA"/>
</dbReference>
<dbReference type="GO" id="GO:0003725">
    <property type="term" value="F:double-stranded RNA binding"/>
    <property type="evidence" value="ECO:0007669"/>
    <property type="project" value="InterPro"/>
</dbReference>
<dbReference type="GO" id="GO:0046872">
    <property type="term" value="F:metal ion binding"/>
    <property type="evidence" value="ECO:0007669"/>
    <property type="project" value="UniProtKB-KW"/>
</dbReference>
<dbReference type="GO" id="GO:0004483">
    <property type="term" value="F:mRNA (nucleoside-2'-O-)-methyltransferase activity"/>
    <property type="evidence" value="ECO:0000314"/>
    <property type="project" value="UniProtKB"/>
</dbReference>
<dbReference type="GO" id="GO:0004482">
    <property type="term" value="F:mRNA 5'-cap (guanine-N7-)-methyltransferase activity"/>
    <property type="evidence" value="ECO:0007669"/>
    <property type="project" value="UniProtKB-EC"/>
</dbReference>
<dbReference type="GO" id="GO:0008233">
    <property type="term" value="F:peptidase activity"/>
    <property type="evidence" value="ECO:0000314"/>
    <property type="project" value="CACAO"/>
</dbReference>
<dbReference type="GO" id="GO:0046983">
    <property type="term" value="F:protein dimerization activity"/>
    <property type="evidence" value="ECO:0007669"/>
    <property type="project" value="InterPro"/>
</dbReference>
<dbReference type="GO" id="GO:0003723">
    <property type="term" value="F:RNA binding"/>
    <property type="evidence" value="ECO:0000314"/>
    <property type="project" value="DisProt"/>
</dbReference>
<dbReference type="GO" id="GO:0140691">
    <property type="term" value="F:RNA folding chaperone"/>
    <property type="evidence" value="ECO:0000314"/>
    <property type="project" value="DisProt"/>
</dbReference>
<dbReference type="GO" id="GO:0003724">
    <property type="term" value="F:RNA helicase activity"/>
    <property type="evidence" value="ECO:0007669"/>
    <property type="project" value="UniProtKB-EC"/>
</dbReference>
<dbReference type="GO" id="GO:0033592">
    <property type="term" value="F:RNA strand annealing activity"/>
    <property type="evidence" value="ECO:0000315"/>
    <property type="project" value="CAFA"/>
</dbReference>
<dbReference type="GO" id="GO:0003968">
    <property type="term" value="F:RNA-directed RNA polymerase activity"/>
    <property type="evidence" value="ECO:0007669"/>
    <property type="project" value="UniProtKB-KW"/>
</dbReference>
<dbReference type="GO" id="GO:0004252">
    <property type="term" value="F:serine-type endopeptidase activity"/>
    <property type="evidence" value="ECO:0007669"/>
    <property type="project" value="InterPro"/>
</dbReference>
<dbReference type="GO" id="GO:0005198">
    <property type="term" value="F:structural molecule activity"/>
    <property type="evidence" value="ECO:0007669"/>
    <property type="project" value="InterPro"/>
</dbReference>
<dbReference type="GO" id="GO:0075512">
    <property type="term" value="P:clathrin-dependent endocytosis of virus by host cell"/>
    <property type="evidence" value="ECO:0007669"/>
    <property type="project" value="UniProtKB-KW"/>
</dbReference>
<dbReference type="GO" id="GO:0039654">
    <property type="term" value="P:fusion of virus membrane with host endosome membrane"/>
    <property type="evidence" value="ECO:0007669"/>
    <property type="project" value="UniProtKB-KW"/>
</dbReference>
<dbReference type="GO" id="GO:0045070">
    <property type="term" value="P:positive regulation of viral genome replication"/>
    <property type="evidence" value="ECO:0000315"/>
    <property type="project" value="CACAO"/>
</dbReference>
<dbReference type="GO" id="GO:0006508">
    <property type="term" value="P:proteolysis"/>
    <property type="evidence" value="ECO:0007669"/>
    <property type="project" value="UniProtKB-KW"/>
</dbReference>
<dbReference type="GO" id="GO:0106005">
    <property type="term" value="P:RNA 5'-cap (guanine-N7)-methylation"/>
    <property type="evidence" value="ECO:0000314"/>
    <property type="project" value="UniProtKB"/>
</dbReference>
<dbReference type="GO" id="GO:0043489">
    <property type="term" value="P:RNA stabilization"/>
    <property type="evidence" value="ECO:0000315"/>
    <property type="project" value="CAFA"/>
</dbReference>
<dbReference type="GO" id="GO:0039520">
    <property type="term" value="P:symbiont-mediated activation of host autophagy"/>
    <property type="evidence" value="ECO:0007669"/>
    <property type="project" value="UniProtKB-KW"/>
</dbReference>
<dbReference type="GO" id="GO:0033668">
    <property type="term" value="P:symbiont-mediated suppression of host apoptosis"/>
    <property type="evidence" value="ECO:0000314"/>
    <property type="project" value="CACAO"/>
</dbReference>
<dbReference type="GO" id="GO:0039574">
    <property type="term" value="P:symbiont-mediated suppression of host JAK-STAT cascade via inhibition of host TYK2 activity"/>
    <property type="evidence" value="ECO:0007669"/>
    <property type="project" value="UniProtKB-KW"/>
</dbReference>
<dbReference type="GO" id="GO:0039576">
    <property type="term" value="P:symbiont-mediated suppression of host JAK-STAT cascade via inhibition of JAK1 activity"/>
    <property type="evidence" value="ECO:0007669"/>
    <property type="project" value="UniProtKB-KW"/>
</dbReference>
<dbReference type="GO" id="GO:0039563">
    <property type="term" value="P:symbiont-mediated suppression of host JAK-STAT cascade via inhibition of STAT1 activity"/>
    <property type="evidence" value="ECO:0007669"/>
    <property type="project" value="UniProtKB-KW"/>
</dbReference>
<dbReference type="GO" id="GO:0039564">
    <property type="term" value="P:symbiont-mediated suppression of host JAK-STAT cascade via inhibition of STAT2 activity"/>
    <property type="evidence" value="ECO:0007669"/>
    <property type="project" value="UniProtKB-KW"/>
</dbReference>
<dbReference type="GO" id="GO:0039502">
    <property type="term" value="P:symbiont-mediated suppression of host type I interferon-mediated signaling pathway"/>
    <property type="evidence" value="ECO:0007669"/>
    <property type="project" value="UniProtKB-KW"/>
</dbReference>
<dbReference type="GO" id="GO:0039694">
    <property type="term" value="P:viral RNA genome replication"/>
    <property type="evidence" value="ECO:0007669"/>
    <property type="project" value="InterPro"/>
</dbReference>
<dbReference type="GO" id="GO:0019062">
    <property type="term" value="P:virion attachment to host cell"/>
    <property type="evidence" value="ECO:0007669"/>
    <property type="project" value="UniProtKB-KW"/>
</dbReference>
<dbReference type="CDD" id="cd20761">
    <property type="entry name" value="capping_2-OMTase_Flaviviridae"/>
    <property type="match status" value="1"/>
</dbReference>
<dbReference type="CDD" id="cd17931">
    <property type="entry name" value="DEXHc_viral_Ns3"/>
    <property type="match status" value="1"/>
</dbReference>
<dbReference type="CDD" id="cd12149">
    <property type="entry name" value="Flavi_E_C"/>
    <property type="match status" value="1"/>
</dbReference>
<dbReference type="CDD" id="cd17038">
    <property type="entry name" value="Flavi_M"/>
    <property type="match status" value="1"/>
</dbReference>
<dbReference type="CDD" id="cd23204">
    <property type="entry name" value="Flavivirus_RdRp"/>
    <property type="match status" value="1"/>
</dbReference>
<dbReference type="CDD" id="cd18806">
    <property type="entry name" value="SF2_C_viral"/>
    <property type="match status" value="1"/>
</dbReference>
<dbReference type="DisProt" id="DP00673"/>
<dbReference type="FunFam" id="1.20.1280.260:FF:000001">
    <property type="entry name" value="Envelope glycoprotein"/>
    <property type="match status" value="1"/>
</dbReference>
<dbReference type="FunFam" id="2.60.40.350:FF:000001">
    <property type="entry name" value="Envelope glycoprotein"/>
    <property type="match status" value="1"/>
</dbReference>
<dbReference type="FunFam" id="1.10.10.930:FF:000002">
    <property type="entry name" value="Genome polyprotein"/>
    <property type="match status" value="1"/>
</dbReference>
<dbReference type="FunFam" id="1.10.260.90:FF:000001">
    <property type="entry name" value="Genome polyprotein"/>
    <property type="match status" value="1"/>
</dbReference>
<dbReference type="FunFam" id="1.10.8.970:FF:000003">
    <property type="entry name" value="Genome polyprotein"/>
    <property type="match status" value="1"/>
</dbReference>
<dbReference type="FunFam" id="2.40.10.120:FF:000005">
    <property type="entry name" value="Genome polyprotein"/>
    <property type="match status" value="1"/>
</dbReference>
<dbReference type="FunFam" id="2.40.10.120:FF:000006">
    <property type="entry name" value="Genome polyprotein"/>
    <property type="match status" value="1"/>
</dbReference>
<dbReference type="FunFam" id="2.60.260.50:FF:000001">
    <property type="entry name" value="Genome polyprotein"/>
    <property type="match status" value="1"/>
</dbReference>
<dbReference type="FunFam" id="3.30.70.2840:FF:000001">
    <property type="entry name" value="Genome polyprotein"/>
    <property type="match status" value="1"/>
</dbReference>
<dbReference type="FunFam" id="3.30.70.2840:FF:000002">
    <property type="entry name" value="Genome polyprotein"/>
    <property type="match status" value="1"/>
</dbReference>
<dbReference type="FunFam" id="3.40.50.150:FF:000105">
    <property type="entry name" value="Genome polyprotein"/>
    <property type="match status" value="1"/>
</dbReference>
<dbReference type="FunFam" id="3.40.50.300:FF:000763">
    <property type="entry name" value="Genome polyprotein"/>
    <property type="match status" value="1"/>
</dbReference>
<dbReference type="Gene3D" id="1.10.10.930">
    <property type="match status" value="1"/>
</dbReference>
<dbReference type="Gene3D" id="1.10.260.90">
    <property type="match status" value="1"/>
</dbReference>
<dbReference type="Gene3D" id="1.20.1280.260">
    <property type="match status" value="1"/>
</dbReference>
<dbReference type="Gene3D" id="2.40.10.120">
    <property type="match status" value="2"/>
</dbReference>
<dbReference type="Gene3D" id="2.60.40.350">
    <property type="match status" value="1"/>
</dbReference>
<dbReference type="Gene3D" id="1.10.8.970">
    <property type="entry name" value="Flavivirus envelope glycoprotein M-like"/>
    <property type="match status" value="1"/>
</dbReference>
<dbReference type="Gene3D" id="2.60.260.50">
    <property type="entry name" value="Flavivirus polyprotein propeptide domain"/>
    <property type="match status" value="1"/>
</dbReference>
<dbReference type="Gene3D" id="3.30.70.2840">
    <property type="entry name" value="Flavivirus RNA-directed RNA polymerase, thumb domain"/>
    <property type="match status" value="3"/>
</dbReference>
<dbReference type="Gene3D" id="3.40.50.300">
    <property type="entry name" value="P-loop containing nucleotide triphosphate hydrolases"/>
    <property type="match status" value="2"/>
</dbReference>
<dbReference type="Gene3D" id="2.60.98.10">
    <property type="entry name" value="Tick-borne Encephalitis virus Glycoprotein, domain 1"/>
    <property type="match status" value="1"/>
</dbReference>
<dbReference type="Gene3D" id="3.40.50.150">
    <property type="entry name" value="Vaccinia Virus protein VP39"/>
    <property type="match status" value="1"/>
</dbReference>
<dbReference type="Gene3D" id="3.30.67.10">
    <property type="entry name" value="Viral Envelope Glycoprotein, domain 2"/>
    <property type="match status" value="1"/>
</dbReference>
<dbReference type="Gene3D" id="3.30.387.10">
    <property type="entry name" value="Viral Envelope Glycoprotein, domain 3"/>
    <property type="match status" value="1"/>
</dbReference>
<dbReference type="InterPro" id="IPR043502">
    <property type="entry name" value="DNA/RNA_pol_sf"/>
</dbReference>
<dbReference type="InterPro" id="IPR000069">
    <property type="entry name" value="Env_glycoprot_M_flavivir"/>
</dbReference>
<dbReference type="InterPro" id="IPR038302">
    <property type="entry name" value="Env_glycoprot_M_sf_flavivir"/>
</dbReference>
<dbReference type="InterPro" id="IPR013755">
    <property type="entry name" value="Flav_gly_cen_dom_subdom1"/>
</dbReference>
<dbReference type="InterPro" id="IPR001122">
    <property type="entry name" value="Flavi_capsidC"/>
</dbReference>
<dbReference type="InterPro" id="IPR037172">
    <property type="entry name" value="Flavi_capsidC_sf"/>
</dbReference>
<dbReference type="InterPro" id="IPR011492">
    <property type="entry name" value="Flavi_DEAD"/>
</dbReference>
<dbReference type="InterPro" id="IPR027287">
    <property type="entry name" value="Flavi_E_Ig-like"/>
</dbReference>
<dbReference type="InterPro" id="IPR026470">
    <property type="entry name" value="Flavi_E_Stem/Anchor_dom"/>
</dbReference>
<dbReference type="InterPro" id="IPR038345">
    <property type="entry name" value="Flavi_E_Stem/Anchor_dom_sf"/>
</dbReference>
<dbReference type="InterPro" id="IPR011998">
    <property type="entry name" value="Flavi_Glycoprot_E_cen/dimer"/>
</dbReference>
<dbReference type="InterPro" id="IPR001157">
    <property type="entry name" value="Flavi_NS1"/>
</dbReference>
<dbReference type="InterPro" id="IPR000752">
    <property type="entry name" value="Flavi_NS2A"/>
</dbReference>
<dbReference type="InterPro" id="IPR000487">
    <property type="entry name" value="Flavi_NS2B"/>
</dbReference>
<dbReference type="InterPro" id="IPR001850">
    <property type="entry name" value="Flavi_NS3_S7"/>
</dbReference>
<dbReference type="InterPro" id="IPR000404">
    <property type="entry name" value="Flavi_NS4A"/>
</dbReference>
<dbReference type="InterPro" id="IPR001528">
    <property type="entry name" value="Flavi_NS4B"/>
</dbReference>
<dbReference type="InterPro" id="IPR046811">
    <property type="entry name" value="Flavi_NS5_thumb"/>
</dbReference>
<dbReference type="InterPro" id="IPR002535">
    <property type="entry name" value="Flavi_propep"/>
</dbReference>
<dbReference type="InterPro" id="IPR038688">
    <property type="entry name" value="Flavi_propep_sf"/>
</dbReference>
<dbReference type="InterPro" id="IPR047530">
    <property type="entry name" value="Flavi_RdRp"/>
</dbReference>
<dbReference type="InterPro" id="IPR000208">
    <property type="entry name" value="Flavi_RdRp_fingers/palm"/>
</dbReference>
<dbReference type="InterPro" id="IPR000336">
    <property type="entry name" value="Flavivir/Alphavir_Ig-like_sf"/>
</dbReference>
<dbReference type="InterPro" id="IPR014412">
    <property type="entry name" value="Gen_Poly_FLV"/>
</dbReference>
<dbReference type="InterPro" id="IPR036253">
    <property type="entry name" value="Glycoprot_cen/dimer_sf"/>
</dbReference>
<dbReference type="InterPro" id="IPR038055">
    <property type="entry name" value="Glycoprot_E_dimer_dom"/>
</dbReference>
<dbReference type="InterPro" id="IPR013756">
    <property type="entry name" value="GlyE_cen_dom_subdom2"/>
</dbReference>
<dbReference type="InterPro" id="IPR014001">
    <property type="entry name" value="Helicase_ATP-bd"/>
</dbReference>
<dbReference type="InterPro" id="IPR001650">
    <property type="entry name" value="Helicase_C-like"/>
</dbReference>
<dbReference type="InterPro" id="IPR014756">
    <property type="entry name" value="Ig_E-set"/>
</dbReference>
<dbReference type="InterPro" id="IPR026490">
    <property type="entry name" value="mRNA_cap_0/1_MeTrfase"/>
</dbReference>
<dbReference type="InterPro" id="IPR049486">
    <property type="entry name" value="NS3-hel_C_flaviviridae"/>
</dbReference>
<dbReference type="InterPro" id="IPR027417">
    <property type="entry name" value="P-loop_NTPase"/>
</dbReference>
<dbReference type="InterPro" id="IPR009003">
    <property type="entry name" value="Peptidase_S1_PA"/>
</dbReference>
<dbReference type="InterPro" id="IPR007094">
    <property type="entry name" value="RNA-dir_pol_PSvirus"/>
</dbReference>
<dbReference type="InterPro" id="IPR002877">
    <property type="entry name" value="RNA_MeTrfase_FtsJ_dom"/>
</dbReference>
<dbReference type="InterPro" id="IPR029063">
    <property type="entry name" value="SAM-dependent_MTases_sf"/>
</dbReference>
<dbReference type="NCBIfam" id="TIGR04240">
    <property type="entry name" value="flavi_E_stem"/>
    <property type="match status" value="1"/>
</dbReference>
<dbReference type="Pfam" id="PF20907">
    <property type="entry name" value="Flav_NS3-hel_C"/>
    <property type="match status" value="1"/>
</dbReference>
<dbReference type="Pfam" id="PF01003">
    <property type="entry name" value="Flavi_capsid"/>
    <property type="match status" value="1"/>
</dbReference>
<dbReference type="Pfam" id="PF07652">
    <property type="entry name" value="Flavi_DEAD"/>
    <property type="match status" value="1"/>
</dbReference>
<dbReference type="Pfam" id="PF21659">
    <property type="entry name" value="Flavi_E_stem"/>
    <property type="match status" value="1"/>
</dbReference>
<dbReference type="Pfam" id="PF02832">
    <property type="entry name" value="Flavi_glycop_C"/>
    <property type="match status" value="1"/>
</dbReference>
<dbReference type="Pfam" id="PF00869">
    <property type="entry name" value="Flavi_glycoprot"/>
    <property type="match status" value="1"/>
</dbReference>
<dbReference type="Pfam" id="PF01004">
    <property type="entry name" value="Flavi_M"/>
    <property type="match status" value="1"/>
</dbReference>
<dbReference type="Pfam" id="PF00948">
    <property type="entry name" value="Flavi_NS1"/>
    <property type="match status" value="1"/>
</dbReference>
<dbReference type="Pfam" id="PF01005">
    <property type="entry name" value="Flavi_NS2A"/>
    <property type="match status" value="1"/>
</dbReference>
<dbReference type="Pfam" id="PF01002">
    <property type="entry name" value="Flavi_NS2B"/>
    <property type="match status" value="1"/>
</dbReference>
<dbReference type="Pfam" id="PF01350">
    <property type="entry name" value="Flavi_NS4A"/>
    <property type="match status" value="1"/>
</dbReference>
<dbReference type="Pfam" id="PF01349">
    <property type="entry name" value="Flavi_NS4B"/>
    <property type="match status" value="1"/>
</dbReference>
<dbReference type="Pfam" id="PF00972">
    <property type="entry name" value="Flavi_NS5"/>
    <property type="match status" value="1"/>
</dbReference>
<dbReference type="Pfam" id="PF20483">
    <property type="entry name" value="Flavi_NS5_thumb"/>
    <property type="match status" value="1"/>
</dbReference>
<dbReference type="Pfam" id="PF01570">
    <property type="entry name" value="Flavi_propep"/>
    <property type="match status" value="1"/>
</dbReference>
<dbReference type="Pfam" id="PF01728">
    <property type="entry name" value="FtsJ"/>
    <property type="match status" value="1"/>
</dbReference>
<dbReference type="Pfam" id="PF00949">
    <property type="entry name" value="Peptidase_S7"/>
    <property type="match status" value="1"/>
</dbReference>
<dbReference type="PIRSF" id="PIRSF003817">
    <property type="entry name" value="Gen_Poly_FLV"/>
    <property type="match status" value="1"/>
</dbReference>
<dbReference type="SMART" id="SM00487">
    <property type="entry name" value="DEXDc"/>
    <property type="match status" value="1"/>
</dbReference>
<dbReference type="SMART" id="SM00490">
    <property type="entry name" value="HELICc"/>
    <property type="match status" value="1"/>
</dbReference>
<dbReference type="SUPFAM" id="SSF56672">
    <property type="entry name" value="DNA/RNA polymerases"/>
    <property type="match status" value="1"/>
</dbReference>
<dbReference type="SUPFAM" id="SSF81296">
    <property type="entry name" value="E set domains"/>
    <property type="match status" value="1"/>
</dbReference>
<dbReference type="SUPFAM" id="SSF101257">
    <property type="entry name" value="Flavivirus capsid protein C"/>
    <property type="match status" value="1"/>
</dbReference>
<dbReference type="SUPFAM" id="SSF52540">
    <property type="entry name" value="P-loop containing nucleoside triphosphate hydrolases"/>
    <property type="match status" value="2"/>
</dbReference>
<dbReference type="SUPFAM" id="SSF53335">
    <property type="entry name" value="S-adenosyl-L-methionine-dependent methyltransferases"/>
    <property type="match status" value="1"/>
</dbReference>
<dbReference type="SUPFAM" id="SSF50494">
    <property type="entry name" value="Trypsin-like serine proteases"/>
    <property type="match status" value="1"/>
</dbReference>
<dbReference type="SUPFAM" id="SSF56983">
    <property type="entry name" value="Viral glycoprotein, central and dimerisation domains"/>
    <property type="match status" value="1"/>
</dbReference>
<dbReference type="PROSITE" id="PS51527">
    <property type="entry name" value="FLAVIVIRUS_NS2B"/>
    <property type="match status" value="1"/>
</dbReference>
<dbReference type="PROSITE" id="PS51528">
    <property type="entry name" value="FLAVIVIRUS_NS3PRO"/>
    <property type="match status" value="1"/>
</dbReference>
<dbReference type="PROSITE" id="PS51192">
    <property type="entry name" value="HELICASE_ATP_BIND_1"/>
    <property type="match status" value="1"/>
</dbReference>
<dbReference type="PROSITE" id="PS51194">
    <property type="entry name" value="HELICASE_CTER"/>
    <property type="match status" value="1"/>
</dbReference>
<dbReference type="PROSITE" id="PS50507">
    <property type="entry name" value="RDRP_SSRNA_POS"/>
    <property type="match status" value="1"/>
</dbReference>
<dbReference type="PROSITE" id="PS51591">
    <property type="entry name" value="RNA_CAP01_NS5_MT"/>
    <property type="match status" value="1"/>
</dbReference>
<organism>
    <name type="scientific">West Nile virus</name>
    <name type="common">WNV</name>
    <dbReference type="NCBI Taxonomy" id="11082"/>
    <lineage>
        <taxon>Viruses</taxon>
        <taxon>Riboviria</taxon>
        <taxon>Orthornavirae</taxon>
        <taxon>Kitrinoviricota</taxon>
        <taxon>Flasuviricetes</taxon>
        <taxon>Amarillovirales</taxon>
        <taxon>Flaviviridae</taxon>
        <taxon>Orthoflavivirus</taxon>
        <taxon>Orthoflavivirus nilense</taxon>
    </lineage>
</organism>
<evidence type="ECO:0000250" key="1">
    <source>
        <dbReference type="UniProtKB" id="P03314"/>
    </source>
</evidence>
<evidence type="ECO:0000250" key="2">
    <source>
        <dbReference type="UniProtKB" id="P14335"/>
    </source>
</evidence>
<evidence type="ECO:0000250" key="3">
    <source>
        <dbReference type="UniProtKB" id="P14336"/>
    </source>
</evidence>
<evidence type="ECO:0000250" key="4">
    <source>
        <dbReference type="UniProtKB" id="P14340"/>
    </source>
</evidence>
<evidence type="ECO:0000250" key="5">
    <source>
        <dbReference type="UniProtKB" id="P17763"/>
    </source>
</evidence>
<evidence type="ECO:0000250" key="6">
    <source>
        <dbReference type="UniProtKB" id="P29990"/>
    </source>
</evidence>
<evidence type="ECO:0000250" key="7">
    <source>
        <dbReference type="UniProtKB" id="Q32ZE1"/>
    </source>
</evidence>
<evidence type="ECO:0000250" key="8">
    <source>
        <dbReference type="UniProtKB" id="Q6YMS4"/>
    </source>
</evidence>
<evidence type="ECO:0000250" key="9">
    <source>
        <dbReference type="UniProtKB" id="Q9Q6P4"/>
    </source>
</evidence>
<evidence type="ECO:0000255" key="10"/>
<evidence type="ECO:0000255" key="11">
    <source>
        <dbReference type="PROSITE-ProRule" id="PRU00539"/>
    </source>
</evidence>
<evidence type="ECO:0000255" key="12">
    <source>
        <dbReference type="PROSITE-ProRule" id="PRU00541"/>
    </source>
</evidence>
<evidence type="ECO:0000255" key="13">
    <source>
        <dbReference type="PROSITE-ProRule" id="PRU00542"/>
    </source>
</evidence>
<evidence type="ECO:0000255" key="14">
    <source>
        <dbReference type="PROSITE-ProRule" id="PRU00859"/>
    </source>
</evidence>
<evidence type="ECO:0000255" key="15">
    <source>
        <dbReference type="PROSITE-ProRule" id="PRU00860"/>
    </source>
</evidence>
<evidence type="ECO:0000255" key="16">
    <source>
        <dbReference type="PROSITE-ProRule" id="PRU00924"/>
    </source>
</evidence>
<evidence type="ECO:0000269" key="17">
    <source>
    </source>
</evidence>
<evidence type="ECO:0000269" key="18">
    <source>
    </source>
</evidence>
<evidence type="ECO:0000269" key="19">
    <source>
    </source>
</evidence>
<evidence type="ECO:0000269" key="20">
    <source>
    </source>
</evidence>
<evidence type="ECO:0000269" key="21">
    <source>
    </source>
</evidence>
<evidence type="ECO:0000269" key="22">
    <source>
    </source>
</evidence>
<evidence type="ECO:0000269" key="23">
    <source>
    </source>
</evidence>
<evidence type="ECO:0000269" key="24">
    <source>
    </source>
</evidence>
<evidence type="ECO:0000269" key="25">
    <source>
    </source>
</evidence>
<evidence type="ECO:0000303" key="26">
    <source>
    </source>
</evidence>
<evidence type="ECO:0000305" key="27"/>
<evidence type="ECO:0007829" key="28">
    <source>
        <dbReference type="PDB" id="2FP7"/>
    </source>
</evidence>
<evidence type="ECO:0007829" key="29">
    <source>
        <dbReference type="PDB" id="2GGV"/>
    </source>
</evidence>
<evidence type="ECO:0007829" key="30">
    <source>
        <dbReference type="PDB" id="2IJO"/>
    </source>
</evidence>
<evidence type="ECO:0007829" key="31">
    <source>
        <dbReference type="PDB" id="2P5P"/>
    </source>
</evidence>
<evidence type="ECO:0007829" key="32">
    <source>
        <dbReference type="PDB" id="2YOL"/>
    </source>
</evidence>
<evidence type="ECO:0007829" key="33">
    <source>
        <dbReference type="PDB" id="5IDK"/>
    </source>
</evidence>